<feature type="initiator methionine" description="Removed" evidence="40">
    <location>
        <position position="1"/>
    </location>
</feature>
<feature type="chain" id="PRO_0000145309" description="DNA gyrase subunit B">
    <location>
        <begin position="2"/>
        <end position="804"/>
    </location>
</feature>
<feature type="domain" description="Toprim" evidence="1">
    <location>
        <begin position="418"/>
        <end position="533"/>
    </location>
</feature>
<feature type="region of interest" description="ATPase domain" evidence="37 40">
    <location>
        <begin position="2"/>
        <end position="220"/>
    </location>
</feature>
<feature type="region of interest" description="Transducer domain" evidence="37 40">
    <location>
        <begin position="221"/>
        <end position="392"/>
    </location>
</feature>
<feature type="active site" description="Proton acceptor (ATPase activity)" evidence="37 43">
    <location>
        <position position="42"/>
    </location>
</feature>
<feature type="binding site" evidence="23 24 37">
    <location>
        <position position="5"/>
    </location>
    <ligand>
        <name>ATP</name>
        <dbReference type="ChEBI" id="CHEBI:30616"/>
    </ligand>
</feature>
<feature type="binding site" evidence="2 23 24">
    <location>
        <position position="46"/>
    </location>
    <ligand>
        <name>ADP</name>
        <dbReference type="ChEBI" id="CHEBI:456216"/>
    </ligand>
</feature>
<feature type="binding site" evidence="2 23 24">
    <location>
        <position position="73"/>
    </location>
    <ligand>
        <name>ATP</name>
        <dbReference type="ChEBI" id="CHEBI:30616"/>
    </ligand>
</feature>
<feature type="binding site" evidence="24">
    <location>
        <position position="94"/>
    </location>
    <ligand>
        <name>K(+)</name>
        <dbReference type="ChEBI" id="CHEBI:29103"/>
    </ligand>
</feature>
<feature type="binding site" evidence="24">
    <location>
        <position position="97"/>
    </location>
    <ligand>
        <name>K(+)</name>
        <dbReference type="ChEBI" id="CHEBI:29103"/>
    </ligand>
</feature>
<feature type="binding site" evidence="24">
    <location>
        <position position="100"/>
    </location>
    <ligand>
        <name>K(+)</name>
        <dbReference type="ChEBI" id="CHEBI:29103"/>
    </ligand>
</feature>
<feature type="binding site" evidence="2 23 24">
    <location>
        <begin position="102"/>
        <end position="103"/>
    </location>
    <ligand>
        <name>ATP</name>
        <dbReference type="ChEBI" id="CHEBI:30616"/>
    </ligand>
</feature>
<feature type="binding site" evidence="24">
    <location>
        <position position="103"/>
    </location>
    <ligand>
        <name>Na(+)</name>
        <dbReference type="ChEBI" id="CHEBI:29101"/>
    </ligand>
</feature>
<feature type="binding site" evidence="24">
    <location>
        <position position="105"/>
    </location>
    <ligand>
        <name>Na(+)</name>
        <dbReference type="ChEBI" id="CHEBI:29101"/>
    </ligand>
</feature>
<feature type="binding site" evidence="2 23 24">
    <location>
        <position position="109"/>
    </location>
    <ligand>
        <name>ATP</name>
        <dbReference type="ChEBI" id="CHEBI:30616"/>
    </ligand>
</feature>
<feature type="binding site" evidence="2 23 24">
    <location>
        <begin position="115"/>
        <end position="120"/>
    </location>
    <ligand>
        <name>ATP</name>
        <dbReference type="ChEBI" id="CHEBI:30616"/>
    </ligand>
</feature>
<feature type="binding site" evidence="24">
    <location>
        <position position="117"/>
    </location>
    <ligand>
        <name>K(+)</name>
        <dbReference type="ChEBI" id="CHEBI:29103"/>
    </ligand>
</feature>
<feature type="binding site" evidence="24">
    <location>
        <position position="121"/>
    </location>
    <ligand>
        <name>K(+)</name>
        <dbReference type="ChEBI" id="CHEBI:29103"/>
    </ligand>
</feature>
<feature type="binding site" evidence="2 24">
    <location>
        <begin position="335"/>
        <end position="337"/>
    </location>
    <ligand>
        <name>ATP</name>
        <dbReference type="ChEBI" id="CHEBI:30616"/>
    </ligand>
</feature>
<feature type="binding site" evidence="1 39 41">
    <location>
        <position position="424"/>
    </location>
    <ligand>
        <name>Mg(2+)</name>
        <dbReference type="ChEBI" id="CHEBI:18420"/>
        <label>1</label>
        <note>catalytic</note>
    </ligand>
</feature>
<feature type="binding site" evidence="1 39 41">
    <location>
        <position position="498"/>
    </location>
    <ligand>
        <name>Mg(2+)</name>
        <dbReference type="ChEBI" id="CHEBI:18420"/>
        <label>1</label>
        <note>catalytic</note>
    </ligand>
</feature>
<feature type="binding site" evidence="1 39 41">
    <location>
        <position position="498"/>
    </location>
    <ligand>
        <name>Mg(2+)</name>
        <dbReference type="ChEBI" id="CHEBI:18420"/>
        <label>2</label>
    </ligand>
</feature>
<feature type="binding site" evidence="1 39 41">
    <location>
        <position position="500"/>
    </location>
    <ligand>
        <name>Mg(2+)</name>
        <dbReference type="ChEBI" id="CHEBI:18420"/>
        <label>2</label>
    </ligand>
</feature>
<feature type="site" description="Transition state stabilizer" evidence="44">
    <location>
        <position position="337"/>
    </location>
</feature>
<feature type="site" description="Interaction with DNA" evidence="1">
    <location>
        <position position="449"/>
    </location>
</feature>
<feature type="site" description="Interaction with DNA" evidence="1">
    <location>
        <position position="452"/>
    </location>
</feature>
<feature type="sequence variant" description="In nal-24, nal-102, nal-103, nal-107, nal-108, nal-111, nal-114, en-2 and en-5 mutants; resistant to nalidixic acid and to enoxacin." evidence="8">
    <original>D</original>
    <variation>N</variation>
    <location>
        <position position="426"/>
    </location>
</feature>
<feature type="sequence variant" description="In nal-31, nal-109, nal-115 and nal-120 mutants; resistant to nalidixic acid." evidence="8">
    <original>K</original>
    <variation>E</variation>
    <location>
        <position position="447"/>
    </location>
</feature>
<feature type="sequence variant" description="In microcin B17 resistant mutant." evidence="10">
    <original>W</original>
    <variation>R</variation>
    <location>
        <position position="751"/>
    </location>
</feature>
<feature type="sequence variant" description="In acriflavine susceptible mutant acrB, decreased supercoiling activity, ATPase activity no longer stimulated by DNA, decreased DNA-binding, bind GyrA normally." evidence="32">
    <original>SR</original>
    <variation>RC</variation>
    <location>
        <begin position="759"/>
        <end position="760"/>
    </location>
</feature>
<feature type="mutagenesis site" description="No dimerization of residues 15-393, fragment has no ATPase activity." evidence="2">
    <location>
        <begin position="1"/>
        <end position="14"/>
    </location>
</feature>
<feature type="mutagenesis site" description="5- to 10-fold reduced dimerization of residues 2-393, fragment has 3- to 5-fold reduced ATPase activity. Fragment dimerizes upon crystallization." evidence="2">
    <original>Y</original>
    <variation>F</variation>
    <variation>S</variation>
    <location>
        <position position="5"/>
    </location>
</feature>
<feature type="mutagenesis site" description="No dimerization of residues 2-393, fragment has significantly decreased ATPase activity." evidence="2">
    <original>I</original>
    <variation>G</variation>
    <location>
        <position position="10"/>
    </location>
</feature>
<feature type="mutagenesis site" description="0.2% supercoiling activity, 7% DNA-dependent ATPase activity, binds ATP normally, complements the N4177 ts mutant." evidence="28">
    <original>H</original>
    <variation>A</variation>
    <location>
        <position position="38"/>
    </location>
</feature>
<feature type="mutagenesis site" description="No supercoiling or DNA-dependent ATPase activity, 25% fluoroquinolone-induced DNA cleavage, 50% ATP-independent DNA relaxation, binds ATP normally, does not complement the N4177 ts mutant." evidence="28">
    <original>E</original>
    <variation>A</variation>
    <location>
        <position position="42"/>
    </location>
</feature>
<feature type="mutagenesis site" description="7% supercoiling activity, 16% DNA-dependent ATPase activity, fluoroquinolone-induced DNA cleavage normal, 40% ATP-independent DNA relaxation, binds ATP normally, complements the N4177 ts mutant." evidence="28">
    <original>E</original>
    <variation>D</variation>
    <location>
        <position position="42"/>
    </location>
</feature>
<feature type="mutagenesis site" description="No supercoiling or DNA-dependent ATPase activity, binds ATP normally, does not complement the N4177 ts mutant." evidence="28">
    <original>E</original>
    <variation>Q</variation>
    <location>
        <position position="42"/>
    </location>
</feature>
<feature type="mutagenesis site" description="Retains ATP-independent DNA relaxation and quinolone-induced DNA cleavage; loss of supercoiling activity, loss of ATPase, does not bind ATP analogs." evidence="29">
    <original>K</original>
    <variation>E</variation>
    <variation>I</variation>
    <variation>T</variation>
    <location>
        <position position="103"/>
    </location>
</feature>
<feature type="mutagenesis site" description="Binds about 50% ATP analog, 2- to 3-fold decreased ATPase, retains ATP-independent DNA relaxation, quinolone-induced DNA cleavage and negative supercoiling activity." evidence="29">
    <original>K</original>
    <variation>E</variation>
    <variation>V</variation>
    <location>
        <position position="110"/>
    </location>
</feature>
<feature type="mutagenesis site" description="Resistance to coumarin antibiotics, decreased ATPase and DNA supercoiling." evidence="5">
    <original>R</original>
    <variation>C</variation>
    <variation>H</variation>
    <variation>S</variation>
    <location>
        <position position="136"/>
    </location>
</feature>
<feature type="mutagenesis site" description="Resistance to coumarin antibiotics, decreased ATPase and DNA supercoiling." evidence="5">
    <original>G</original>
    <variation>V</variation>
    <location>
        <position position="164"/>
    </location>
</feature>
<feature type="mutagenesis site" description="Wild-type ATP analog-binding and ATPase activity in N-terminal fragment GyrB43 (residues 2-393), in whole protein wild-type DNA supercoiling and ATP-independent DNA relaxation, 50% ATPase activity which is not stimulated by DNA, complements the N4177 ts mutant." evidence="34">
    <original>Q</original>
    <variation>A</variation>
    <location>
        <position position="335"/>
    </location>
</feature>
<feature type="mutagenesis site" description="Binds about 60% ATP analog but strongly decreased enzyme turnover for ATPase activity in N-terminal fragment GyrB43 (residues 2-393), in whole protein &lt;1% DNA supercoiling and ATPase activity not stimulated by DNA, wild-type ATP-independent DNA relaxation and quinolone-induced DNA cleavage, does not complement the N4177 ts mutant." evidence="34">
    <original>K</original>
    <variation>Q</variation>
    <location>
        <position position="337"/>
    </location>
</feature>
<feature type="mutagenesis site" description="Strongly reduced DNA supercoiling and relaxation activity. Reduces ATP hydrolysis in response to DNA binding, but has only minor effect on the basal rate of ATP hydrolysis." evidence="4">
    <original>E</original>
    <variation>A</variation>
    <variation>Q</variation>
    <location>
        <position position="424"/>
    </location>
</feature>
<feature type="mutagenesis site" description="Cannot be made, suggesting it is lethal. This is temperature-sensitive in S.typhimurium, but not lethal." evidence="9">
    <original>R</original>
    <variation>S</variation>
    <location>
        <position position="436"/>
    </location>
</feature>
<feature type="mutagenesis site" description="Strongly reduced DNA supercoiling and relaxation activity. Reduces ATP hydrolysis in response to DNA binding, but has only minor effect on the basal rate of ATP hydrolysis." evidence="4">
    <original>D</original>
    <variation>A</variation>
    <variation>N</variation>
    <location>
        <position position="498"/>
    </location>
</feature>
<feature type="mutagenesis site" description="Strongly reduced DNA supercoiling and relaxation activity. Reduces ATP hydrolysis in response to DNA binding, but has only minor effect on the basal rate of ATP hydrolysis." evidence="4">
    <original>D</original>
    <variation>A</variation>
    <location>
        <position position="500"/>
    </location>
</feature>
<feature type="mutagenesis site" description="Alters metal-dependency of ATP-independent DNA relaxation, prefers Mn(2+) and Co(2+) over wild-type Mg(2+)." evidence="4">
    <original>D</original>
    <variation>C</variation>
    <variation>H</variation>
    <location>
        <position position="500"/>
    </location>
</feature>
<feature type="mutagenesis site" description="Strongly reduced DNA supercoiling and relaxation activity. Reduces ATP hydrolysis in response to DNA binding, but has only minor effect on the basal rate of ATP hydrolysis." evidence="4">
    <original>D</original>
    <variation>A</variation>
    <location>
        <position position="502"/>
    </location>
</feature>
<feature type="mutagenesis site" description="Alters metal-dependency of ATP-independent DNA relaxation, prefers Mn(2+) and Co(2+) over wild-type Mg(2+)." evidence="4">
    <original>D</original>
    <variation>C</variation>
    <variation>H</variation>
    <location>
        <position position="502"/>
    </location>
</feature>
<feature type="sequence conflict" description="In Ref. 4; AAA62050." evidence="36" ref="4">
    <original>A</original>
    <variation>P</variation>
    <location>
        <position position="385"/>
    </location>
</feature>
<feature type="sequence conflict" description="In Ref. 3; BAA20341." evidence="36" ref="3">
    <original>R</original>
    <variation>G</variation>
    <location>
        <position position="436"/>
    </location>
</feature>
<feature type="helix" evidence="54">
    <location>
        <begin position="9"/>
        <end position="21"/>
    </location>
</feature>
<feature type="helix" evidence="54">
    <location>
        <begin position="23"/>
        <end position="27"/>
    </location>
</feature>
<feature type="strand" evidence="54">
    <location>
        <begin position="30"/>
        <end position="33"/>
    </location>
</feature>
<feature type="helix" evidence="54">
    <location>
        <begin position="34"/>
        <end position="52"/>
    </location>
</feature>
<feature type="strand" evidence="52">
    <location>
        <begin position="54"/>
        <end position="56"/>
    </location>
</feature>
<feature type="strand" evidence="54">
    <location>
        <begin position="58"/>
        <end position="63"/>
    </location>
</feature>
<feature type="turn" evidence="45">
    <location>
        <begin position="65"/>
        <end position="67"/>
    </location>
</feature>
<feature type="strand" evidence="54">
    <location>
        <begin position="69"/>
        <end position="73"/>
    </location>
</feature>
<feature type="strand" evidence="54">
    <location>
        <begin position="81"/>
        <end position="83"/>
    </location>
</feature>
<feature type="turn" evidence="54">
    <location>
        <begin position="84"/>
        <end position="87"/>
    </location>
</feature>
<feature type="helix" evidence="54">
    <location>
        <begin position="90"/>
        <end position="96"/>
    </location>
</feature>
<feature type="helix" evidence="55">
    <location>
        <begin position="98"/>
        <end position="101"/>
    </location>
</feature>
<feature type="strand" evidence="50">
    <location>
        <begin position="104"/>
        <end position="108"/>
    </location>
</feature>
<feature type="strand" evidence="48">
    <location>
        <begin position="113"/>
        <end position="115"/>
    </location>
</feature>
<feature type="strand" evidence="55">
    <location>
        <begin position="116"/>
        <end position="118"/>
    </location>
</feature>
<feature type="helix" evidence="54">
    <location>
        <begin position="120"/>
        <end position="125"/>
    </location>
</feature>
<feature type="strand" evidence="54">
    <location>
        <begin position="127"/>
        <end position="136"/>
    </location>
</feature>
<feature type="strand" evidence="54">
    <location>
        <begin position="139"/>
        <end position="146"/>
    </location>
</feature>
<feature type="strand" evidence="54">
    <location>
        <begin position="149"/>
        <end position="152"/>
    </location>
</feature>
<feature type="strand" evidence="54">
    <location>
        <begin position="155"/>
        <end position="159"/>
    </location>
</feature>
<feature type="strand" evidence="54">
    <location>
        <begin position="164"/>
        <end position="171"/>
    </location>
</feature>
<feature type="turn" evidence="54">
    <location>
        <begin position="173"/>
        <end position="175"/>
    </location>
</feature>
<feature type="helix" evidence="54">
    <location>
        <begin position="184"/>
        <end position="197"/>
    </location>
</feature>
<feature type="turn" evidence="54">
    <location>
        <begin position="198"/>
        <end position="200"/>
    </location>
</feature>
<feature type="strand" evidence="54">
    <location>
        <begin position="202"/>
        <end position="207"/>
    </location>
</feature>
<feature type="turn" evidence="54">
    <location>
        <begin position="208"/>
        <end position="210"/>
    </location>
</feature>
<feature type="strand" evidence="54">
    <location>
        <begin position="213"/>
        <end position="216"/>
    </location>
</feature>
<feature type="helix" evidence="50">
    <location>
        <begin position="221"/>
        <end position="230"/>
    </location>
</feature>
<feature type="strand" evidence="49">
    <location>
        <begin position="231"/>
        <end position="233"/>
    </location>
</feature>
<feature type="strand" evidence="50">
    <location>
        <begin position="235"/>
        <end position="238"/>
    </location>
</feature>
<feature type="strand" evidence="50">
    <location>
        <begin position="241"/>
        <end position="247"/>
    </location>
</feature>
<feature type="strand" evidence="50">
    <location>
        <begin position="250"/>
        <end position="262"/>
    </location>
</feature>
<feature type="strand" evidence="50">
    <location>
        <begin position="265"/>
        <end position="270"/>
    </location>
</feature>
<feature type="strand" evidence="51">
    <location>
        <begin position="273"/>
        <end position="279"/>
    </location>
</feature>
<feature type="helix" evidence="50">
    <location>
        <begin position="280"/>
        <end position="299"/>
    </location>
</feature>
<feature type="helix" evidence="46">
    <location>
        <begin position="302"/>
        <end position="306"/>
    </location>
</feature>
<feature type="turn" evidence="53">
    <location>
        <begin position="309"/>
        <end position="311"/>
    </location>
</feature>
<feature type="helix" evidence="50">
    <location>
        <begin position="312"/>
        <end position="316"/>
    </location>
</feature>
<feature type="strand" evidence="50">
    <location>
        <begin position="319"/>
        <end position="326"/>
    </location>
</feature>
<feature type="strand" evidence="50">
    <location>
        <begin position="332"/>
        <end position="334"/>
    </location>
</feature>
<feature type="helix" evidence="50">
    <location>
        <begin position="343"/>
        <end position="363"/>
    </location>
</feature>
<feature type="helix" evidence="50">
    <location>
        <begin position="365"/>
        <end position="391"/>
    </location>
</feature>
<feature type="helix" evidence="60">
    <location>
        <begin position="415"/>
        <end position="417"/>
    </location>
</feature>
<feature type="strand" evidence="60">
    <location>
        <begin position="419"/>
        <end position="425"/>
    </location>
</feature>
<feature type="helix" evidence="60">
    <location>
        <begin position="426"/>
        <end position="434"/>
    </location>
</feature>
<feature type="turn" evidence="60">
    <location>
        <begin position="438"/>
        <end position="440"/>
    </location>
</feature>
<feature type="strand" evidence="60">
    <location>
        <begin position="441"/>
        <end position="445"/>
    </location>
</feature>
<feature type="turn" evidence="60">
    <location>
        <begin position="453"/>
        <end position="455"/>
    </location>
</feature>
<feature type="helix" evidence="60">
    <location>
        <begin position="458"/>
        <end position="462"/>
    </location>
</feature>
<feature type="helix" evidence="60">
    <location>
        <begin position="465"/>
        <end position="474"/>
    </location>
</feature>
<feature type="strand" evidence="60">
    <location>
        <begin position="479"/>
        <end position="482"/>
    </location>
</feature>
<feature type="helix" evidence="58">
    <location>
        <begin position="485"/>
        <end position="487"/>
    </location>
</feature>
<feature type="strand" evidence="60">
    <location>
        <begin position="493"/>
        <end position="496"/>
    </location>
</feature>
<feature type="helix" evidence="60">
    <location>
        <begin position="501"/>
        <end position="517"/>
    </location>
</feature>
<feature type="helix" evidence="60">
    <location>
        <begin position="519"/>
        <end position="524"/>
    </location>
</feature>
<feature type="strand" evidence="60">
    <location>
        <begin position="527"/>
        <end position="530"/>
    </location>
</feature>
<feature type="strand" evidence="60">
    <location>
        <begin position="535"/>
        <end position="539"/>
    </location>
</feature>
<feature type="strand" evidence="60">
    <location>
        <begin position="542"/>
        <end position="546"/>
    </location>
</feature>
<feature type="helix" evidence="60">
    <location>
        <begin position="549"/>
        <end position="559"/>
    </location>
</feature>
<feature type="strand" evidence="60">
    <location>
        <begin position="561"/>
        <end position="563"/>
    </location>
</feature>
<feature type="strand" evidence="57">
    <location>
        <begin position="565"/>
        <end position="569"/>
    </location>
</feature>
<feature type="strand" evidence="56">
    <location>
        <begin position="570"/>
        <end position="572"/>
    </location>
</feature>
<feature type="strand" evidence="47">
    <location>
        <begin position="573"/>
        <end position="576"/>
    </location>
</feature>
<feature type="helix" evidence="60">
    <location>
        <begin position="577"/>
        <end position="596"/>
    </location>
</feature>
<feature type="turn" evidence="60">
    <location>
        <begin position="597"/>
        <end position="600"/>
    </location>
</feature>
<feature type="helix" evidence="60">
    <location>
        <begin position="603"/>
        <end position="608"/>
    </location>
</feature>
<feature type="helix" evidence="60">
    <location>
        <begin position="609"/>
        <end position="611"/>
    </location>
</feature>
<feature type="helix" evidence="60">
    <location>
        <begin position="617"/>
        <end position="619"/>
    </location>
</feature>
<feature type="turn" evidence="60">
    <location>
        <begin position="620"/>
        <end position="622"/>
    </location>
</feature>
<feature type="helix" evidence="60">
    <location>
        <begin position="625"/>
        <end position="639"/>
    </location>
</feature>
<feature type="strand" evidence="60">
    <location>
        <begin position="643"/>
        <end position="653"/>
    </location>
</feature>
<feature type="helix" evidence="60">
    <location>
        <begin position="656"/>
        <end position="658"/>
    </location>
</feature>
<feature type="strand" evidence="60">
    <location>
        <begin position="660"/>
        <end position="668"/>
    </location>
</feature>
<feature type="strand" evidence="60">
    <location>
        <begin position="671"/>
        <end position="676"/>
    </location>
</feature>
<feature type="helix" evidence="60">
    <location>
        <begin position="679"/>
        <end position="682"/>
    </location>
</feature>
<feature type="helix" evidence="60">
    <location>
        <begin position="685"/>
        <end position="695"/>
    </location>
</feature>
<feature type="turn" evidence="60">
    <location>
        <begin position="696"/>
        <end position="699"/>
    </location>
</feature>
<feature type="turn" evidence="47">
    <location>
        <begin position="700"/>
        <end position="703"/>
    </location>
</feature>
<feature type="strand" evidence="60">
    <location>
        <begin position="706"/>
        <end position="708"/>
    </location>
</feature>
<feature type="strand" evidence="60">
    <location>
        <begin position="713"/>
        <end position="715"/>
    </location>
</feature>
<feature type="helix" evidence="60">
    <location>
        <begin position="719"/>
        <end position="730"/>
    </location>
</feature>
<feature type="turn" evidence="60">
    <location>
        <begin position="731"/>
        <end position="733"/>
    </location>
</feature>
<feature type="strand" evidence="60">
    <location>
        <begin position="735"/>
        <end position="738"/>
    </location>
</feature>
<feature type="helix" evidence="60">
    <location>
        <begin position="742"/>
        <end position="744"/>
    </location>
</feature>
<feature type="helix" evidence="60">
    <location>
        <begin position="747"/>
        <end position="754"/>
    </location>
</feature>
<feature type="turn" evidence="59">
    <location>
        <begin position="757"/>
        <end position="759"/>
    </location>
</feature>
<feature type="strand" evidence="60">
    <location>
        <begin position="762"/>
        <end position="766"/>
    </location>
</feature>
<feature type="helix" evidence="60">
    <location>
        <begin position="772"/>
        <end position="781"/>
    </location>
</feature>
<feature type="helix" evidence="60">
    <location>
        <begin position="786"/>
        <end position="795"/>
    </location>
</feature>
<feature type="helix" evidence="60">
    <location>
        <begin position="798"/>
        <end position="801"/>
    </location>
</feature>
<comment type="function">
    <text evidence="3 4 5 6 9 11 12 13 14 15 16 17 18 20 21 22 23 24 25 26 27 28 29 31 32 33 34">DNA gyrase negatively supercoils closed circular double-stranded DNA in an ATP-dependent manner to maintain chromosomes in an underwound state (PubMed:12051842, PubMed:12051843, PubMed:1323022, PubMed:18642932, PubMed:186775, PubMed:19060136, PubMed:19965760, PubMed:20356737, PubMed:20675723, PubMed:22457353, PubMed:23294697, PubMed:23352267, PubMed:24386374, PubMed:25202966, PubMed:25849408, PubMed:3031051, PubMed:7811004, PubMed:8248233, PubMed:8621650, PubMed:9657678). This makes better substrates for topoisomerase 4 (ParC and ParE) which is the main enzyme that unlinks newly replicated chromosomes in E.coli (PubMed:9334322). Gyrase catalyzes the interconversion of other topological isomers of double-stranded DNA rings, including catenanes (PubMed:22457352). Relaxes negatively supercoiled DNA in an ATP-independent manner (PubMed:337300). E.coli gyrase has higher supercoiling activity than other characterized bacterial gyrases; at comparable concentrations E.coli gyrase introduces more supercoils faster than M.tuberculosis gyrase, while M.tuberculosis gyrase has higher decatenation than supercoiling activity compared to E.coli (PubMed:22457352). E.coli makes 15% more negative supercoils in pBR322 plasmid DNA than S.typhimurium; the S.typhimurium GyrB subunit is toxic in E.coli, while the E.coli copy can be expressed in S.typhimurium even though the 2 subunits have 777/804 residues identical (PubMed:17400739). The enzymatic differences between E.coli gyrase and topoisomerase IV are largely due to the GyrA C-terminal domain (approximately residues 524-841) and specifically the GyrA-box (PubMed:16332690, PubMed:8962066).</text>
</comment>
<comment type="catalytic activity">
    <reaction evidence="1 3 4 11 12 14 16 19">
        <text>ATP-dependent breakage, passage and rejoining of double-stranded DNA.</text>
        <dbReference type="EC" id="5.6.2.2"/>
    </reaction>
</comment>
<comment type="cofactor">
    <cofactor evidence="1 4 11">
        <name>Mg(2+)</name>
        <dbReference type="ChEBI" id="CHEBI:18420"/>
    </cofactor>
    <cofactor evidence="1 4 11">
        <name>Mn(2+)</name>
        <dbReference type="ChEBI" id="CHEBI:29035"/>
    </cofactor>
    <cofactor evidence="1 4 11">
        <name>Ca(2+)</name>
        <dbReference type="ChEBI" id="CHEBI:29108"/>
    </cofactor>
    <text evidence="1 4 11">Binds two Mg(2+) per subunit. The magnesium ions form salt bridges with both the protein and the DNA. Can also accept other divalent metal cations, such as Mn(2+) or Ca(2+) (PubMed:12051843, PubMed:18642932).</text>
</comment>
<comment type="cofactor">
    <cofactor evidence="24">
        <name>K(+)</name>
        <dbReference type="ChEBI" id="CHEBI:29103"/>
    </cofactor>
    <text evidence="24">Binds one K(+) per subunit which interacts with the alpha-phosphate of ATP analog and stimulates ATPase activity of the N-terminal fragment; Na(+) or water bind less well (PubMed:25849408).</text>
</comment>
<comment type="cofactor">
    <cofactor evidence="24">
        <name>Na(+)</name>
        <dbReference type="ChEBI" id="CHEBI:29101"/>
    </cofactor>
    <text evidence="24">Binds one Na(+) per subunit, with 4 ligands provided by water; may be able to bind K(+), the functional significance of this ion is unclear (PubMed:25849408).</text>
</comment>
<comment type="activity regulation">
    <text evidence="13 15 20 21 22 25 26 27 30 32 38">Gyrase is the target of many classes of inhibitors, including coumarins, cyclothialidines, pyrrolopyrimidines, pyrazolthiazoles and (fluoro)quinolones. Coumarins bind to GyrB and are competitive inhibitors of its ATPase activity (PubMed:7811004). Cyclothialidines also bind GyrB and are ATPase competitive inhibitors; they seem to act differently from coumarins (PubMed:7811004, PubMed:8635474). Pyrrolopyrimidines inhibit both GyrB and its paralog in topoisomerase 4 (parE) (PubMed:23294697, PubMed:23352267, PubMed:24386374). Pyrazolthiazoles also inhibit the ATPase activity of GyrB (PubMed:20356737). Quinolones bind GyrA when the enzyme is complexed with DNA and trap the enzyme in a covalent reaction intermediate with DNA (PubMed:12051842, PubMed:3031051, PubMed:337300). Acriflavine inhibits DNA supercoiling and DNA-stimulated ATPase activity (PubMed:9148951). DNA supercoiling activity is protected from fluoroquinolone inhibition by QnrB4; QnrB4 has no effect on supercoiling activity alone (PubMed:19060136).</text>
</comment>
<comment type="subunit">
    <text evidence="1 3 4 11 14 16 32">Heterotetramer, composed of two GyrA and two GyrB chains (PubMed:12051842, PubMed:9148951). In the heterotetramer, GyrA contains the active site tyrosine that forms a transient covalent intermediate with the DNA, while GyrB binds cofactors and catalyzes ATP hydrolysis (PubMed:12051843, PubMed:18642932, PubMed:19965760, PubMed:20675723).</text>
</comment>
<comment type="interaction">
    <interactant intactId="EBI-541911">
        <id>P0AES6</id>
    </interactant>
    <interactant intactId="EBI-547129">
        <id>P0AES4</id>
        <label>gyrA</label>
    </interactant>
    <organismsDiffer>false</organismsDiffer>
    <experiments>7</experiments>
</comment>
<comment type="subcellular location">
    <subcellularLocation>
        <location evidence="1">Cytoplasm</location>
    </subcellularLocation>
</comment>
<comment type="domain">
    <text evidence="2 7 29 42 44">Consists of 3 domains; the ATPase domain (residues 1-220), the transducer domain (221-392) and the toprim domain (393-804) (PubMed:10734094, PubMed:1646964). ATP-binding is cooperative, and both subunits must be wild-type at residue 103 for supercoiling to occur (PubMed:8621650). Non-hydrolyzable ATP analogs (and ATP-binding) induce dimerization and enhance ATPase activity (PubMed:10734094, PubMed:9657678). ATP hydrolysis induces domain shifts that are probably part of the mechanism of DNA cleavage and rejoining (PubMed:25202966).</text>
</comment>
<comment type="miscellaneous">
    <text evidence="25 38">When the enzyme transiently cleaves DNA a phosphotyrosine bond is formed between GyrA and DNA in an ATP-independent manner (PubMed:3031051). In the presence of quinolones this intermediate can be trapped and is used as an indicator of drug toxicity (PubMed:12051842).</text>
</comment>
<comment type="similarity">
    <text evidence="1">Belongs to the type II topoisomerase family.</text>
</comment>
<sequence length="804" mass="89950">MSNSYDSSSIKVLKGLDAVRKRPGMYIGDTDDGTGLHHMVFEVVDNAIDEALAGHCKEIIVTIHADNSVSVQDDGRGIPTGIHPEEGVSAAEVIMTVLHAGGKFDDNSYKVSGGLHGVGVSVVNALSQKLELVIQREGKIHRQIYEHGVPQAPLAVTGETEKTGTMVRFWPSLETFTNVTEFEYEILAKRLRELSFLNSGVSIRLRDKRDGKEDHFHYEGGIKAFVEYLNKNKTPIHPNIFYFSTEKDGIGVEVALQWNDGFQENIYCFTNNIPQRDGGTHLAGFRAAMTRTLNAYMDKEGYSKKAKVSATGDDAREGLIAVVSVKVPDPKFSSQTKDKLVSSEVKSAVEQQMNELLAEYLLENPTDAKIVVGKIIDAARAREAARRAREMTRRKGALDLAGLPGKLADCQERDPALSELYLVEGDSAGGSAKQGRNRKNQAILPLKGKILNVEKARFDKMLSSQEVATLITALGCGIGRDEYNPDKLRYHSIIIMTDADVDGSHIRTLLLTFFYRQMPEIVERGHVYIAQPPLYKVKKGKQEQYIKDDEAMDQYQISIALDGATLHTNASAPALAGEALEKLVSEYNATQKMINRMERRYPKAMLKELIYQPTLTEADLSDEQTVTRWVNALVSELNDKEQHGSQWKFDVHTNAEQNLFEPIVRVRTHGVDTDYPLDHEFITGGEYRRICTLGEKLRGLLEEDAFIERGERRQPVASFEQALDWLVKESRRGLSIQRYKGLGEMNPEQLWETTMDPESRRMLRVTVKDAIAADQLFTTLMGDAVEPRRAFIEENALKAANIDI</sequence>
<gene>
    <name evidence="1" type="primary">gyrB</name>
    <name evidence="35" type="synonym">acrB</name>
    <name type="synonym">cou</name>
    <name type="synonym">himB</name>
    <name type="synonym">hisU</name>
    <name type="synonym">nalC</name>
    <name type="synonym">parA</name>
    <name type="synonym">pcbA</name>
    <name type="ordered locus">b3699</name>
    <name type="ordered locus">JW5625</name>
</gene>
<evidence type="ECO:0000255" key="1">
    <source>
        <dbReference type="HAMAP-Rule" id="MF_01898"/>
    </source>
</evidence>
<evidence type="ECO:0000269" key="2">
    <source>
    </source>
</evidence>
<evidence type="ECO:0000269" key="3">
    <source>
    </source>
</evidence>
<evidence type="ECO:0000269" key="4">
    <source>
    </source>
</evidence>
<evidence type="ECO:0000269" key="5">
    <source>
    </source>
</evidence>
<evidence type="ECO:0000269" key="6">
    <source>
    </source>
</evidence>
<evidence type="ECO:0000269" key="7">
    <source>
    </source>
</evidence>
<evidence type="ECO:0000269" key="8">
    <source>
    </source>
</evidence>
<evidence type="ECO:0000269" key="9">
    <source>
    </source>
</evidence>
<evidence type="ECO:0000269" key="10">
    <source>
    </source>
</evidence>
<evidence type="ECO:0000269" key="11">
    <source>
    </source>
</evidence>
<evidence type="ECO:0000269" key="12">
    <source>
    </source>
</evidence>
<evidence type="ECO:0000269" key="13">
    <source>
    </source>
</evidence>
<evidence type="ECO:0000269" key="14">
    <source>
    </source>
</evidence>
<evidence type="ECO:0000269" key="15">
    <source>
    </source>
</evidence>
<evidence type="ECO:0000269" key="16">
    <source>
    </source>
</evidence>
<evidence type="ECO:0000269" key="17">
    <source>
    </source>
</evidence>
<evidence type="ECO:0000269" key="18">
    <source>
    </source>
</evidence>
<evidence type="ECO:0000269" key="19">
    <source>
    </source>
</evidence>
<evidence type="ECO:0000269" key="20">
    <source>
    </source>
</evidence>
<evidence type="ECO:0000269" key="21">
    <source>
    </source>
</evidence>
<evidence type="ECO:0000269" key="22">
    <source>
    </source>
</evidence>
<evidence type="ECO:0000269" key="23">
    <source>
    </source>
</evidence>
<evidence type="ECO:0000269" key="24">
    <source>
    </source>
</evidence>
<evidence type="ECO:0000269" key="25">
    <source>
    </source>
</evidence>
<evidence type="ECO:0000269" key="26">
    <source>
    </source>
</evidence>
<evidence type="ECO:0000269" key="27">
    <source>
    </source>
</evidence>
<evidence type="ECO:0000269" key="28">
    <source>
    </source>
</evidence>
<evidence type="ECO:0000269" key="29">
    <source>
    </source>
</evidence>
<evidence type="ECO:0000269" key="30">
    <source>
    </source>
</evidence>
<evidence type="ECO:0000269" key="31">
    <source>
    </source>
</evidence>
<evidence type="ECO:0000269" key="32">
    <source>
    </source>
</evidence>
<evidence type="ECO:0000269" key="33">
    <source>
    </source>
</evidence>
<evidence type="ECO:0000269" key="34">
    <source>
    </source>
</evidence>
<evidence type="ECO:0000303" key="35">
    <source>
    </source>
</evidence>
<evidence type="ECO:0000305" key="36"/>
<evidence type="ECO:0000305" key="37">
    <source>
    </source>
</evidence>
<evidence type="ECO:0000305" key="38">
    <source>
    </source>
</evidence>
<evidence type="ECO:0000305" key="39">
    <source>
    </source>
</evidence>
<evidence type="ECO:0000305" key="40">
    <source>
    </source>
</evidence>
<evidence type="ECO:0000305" key="41">
    <source>
    </source>
</evidence>
<evidence type="ECO:0000305" key="42">
    <source>
    </source>
</evidence>
<evidence type="ECO:0000305" key="43">
    <source>
    </source>
</evidence>
<evidence type="ECO:0000305" key="44">
    <source>
    </source>
</evidence>
<evidence type="ECO:0007829" key="45">
    <source>
        <dbReference type="PDB" id="1AJ6"/>
    </source>
</evidence>
<evidence type="ECO:0007829" key="46">
    <source>
        <dbReference type="PDB" id="1EI1"/>
    </source>
</evidence>
<evidence type="ECO:0007829" key="47">
    <source>
        <dbReference type="PDB" id="3NUH"/>
    </source>
</evidence>
<evidence type="ECO:0007829" key="48">
    <source>
        <dbReference type="PDB" id="4HYP"/>
    </source>
</evidence>
<evidence type="ECO:0007829" key="49">
    <source>
        <dbReference type="PDB" id="4PU9"/>
    </source>
</evidence>
<evidence type="ECO:0007829" key="50">
    <source>
        <dbReference type="PDB" id="4WUB"/>
    </source>
</evidence>
<evidence type="ECO:0007829" key="51">
    <source>
        <dbReference type="PDB" id="5L3J"/>
    </source>
</evidence>
<evidence type="ECO:0007829" key="52">
    <source>
        <dbReference type="PDB" id="5Z9L"/>
    </source>
</evidence>
<evidence type="ECO:0007829" key="53">
    <source>
        <dbReference type="PDB" id="6ENG"/>
    </source>
</evidence>
<evidence type="ECO:0007829" key="54">
    <source>
        <dbReference type="PDB" id="7P2M"/>
    </source>
</evidence>
<evidence type="ECO:0007829" key="55">
    <source>
        <dbReference type="PDB" id="7P2W"/>
    </source>
</evidence>
<evidence type="ECO:0007829" key="56">
    <source>
        <dbReference type="PDB" id="7Z9G"/>
    </source>
</evidence>
<evidence type="ECO:0007829" key="57">
    <source>
        <dbReference type="PDB" id="8QQI"/>
    </source>
</evidence>
<evidence type="ECO:0007829" key="58">
    <source>
        <dbReference type="PDB" id="8QQS"/>
    </source>
</evidence>
<evidence type="ECO:0007829" key="59">
    <source>
        <dbReference type="PDB" id="8QQU"/>
    </source>
</evidence>
<evidence type="ECO:0007829" key="60">
    <source>
        <dbReference type="PDB" id="9GGQ"/>
    </source>
</evidence>
<protein>
    <recommendedName>
        <fullName evidence="1">DNA gyrase subunit B</fullName>
        <ecNumber evidence="1 3 4 11 12 14">5.6.2.2</ecNumber>
    </recommendedName>
    <alternativeName>
        <fullName>Type IIA topoisomerase subunit GyrB</fullName>
    </alternativeName>
</protein>
<organism>
    <name type="scientific">Escherichia coli (strain K12)</name>
    <dbReference type="NCBI Taxonomy" id="83333"/>
    <lineage>
        <taxon>Bacteria</taxon>
        <taxon>Pseudomonadati</taxon>
        <taxon>Pseudomonadota</taxon>
        <taxon>Gammaproteobacteria</taxon>
        <taxon>Enterobacterales</taxon>
        <taxon>Enterobacteriaceae</taxon>
        <taxon>Escherichia</taxon>
    </lineage>
</organism>
<accession>P0AES6</accession>
<accession>O08438</accession>
<accession>P06982</accession>
<accession>Q2M811</accession>
<dbReference type="EC" id="5.6.2.2" evidence="1 3 4 11 12 14"/>
<dbReference type="EMBL" id="X04341">
    <property type="protein sequence ID" value="CAA27871.1"/>
    <property type="molecule type" value="Genomic_DNA"/>
</dbReference>
<dbReference type="EMBL" id="D87842">
    <property type="protein sequence ID" value="BAA20341.1"/>
    <property type="molecule type" value="Genomic_DNA"/>
</dbReference>
<dbReference type="EMBL" id="L10328">
    <property type="protein sequence ID" value="AAA62050.1"/>
    <property type="molecule type" value="Genomic_DNA"/>
</dbReference>
<dbReference type="EMBL" id="U00096">
    <property type="protein sequence ID" value="AAT48201.1"/>
    <property type="molecule type" value="Genomic_DNA"/>
</dbReference>
<dbReference type="EMBL" id="AP009048">
    <property type="protein sequence ID" value="BAE77595.1"/>
    <property type="molecule type" value="Genomic_DNA"/>
</dbReference>
<dbReference type="EMBL" id="M15548">
    <property type="protein sequence ID" value="AAA23949.1"/>
    <property type="molecule type" value="Genomic_DNA"/>
</dbReference>
<dbReference type="PIR" id="D65172">
    <property type="entry name" value="ISECTB"/>
</dbReference>
<dbReference type="RefSeq" id="WP_000072067.1">
    <property type="nucleotide sequence ID" value="NZ_STEB01000015.1"/>
</dbReference>
<dbReference type="RefSeq" id="YP_026241.1">
    <property type="nucleotide sequence ID" value="NC_000913.3"/>
</dbReference>
<dbReference type="PDB" id="1AJ6">
    <property type="method" value="X-ray"/>
    <property type="resolution" value="2.30 A"/>
    <property type="chains" value="A=2-220"/>
</dbReference>
<dbReference type="PDB" id="1EI1">
    <property type="method" value="X-ray"/>
    <property type="resolution" value="2.30 A"/>
    <property type="chains" value="A/B=2-392"/>
</dbReference>
<dbReference type="PDB" id="1KZN">
    <property type="method" value="X-ray"/>
    <property type="resolution" value="2.30 A"/>
    <property type="chains" value="A=15-219"/>
</dbReference>
<dbReference type="PDB" id="3G7E">
    <property type="method" value="X-ray"/>
    <property type="resolution" value="2.20 A"/>
    <property type="chains" value="A=15-217"/>
</dbReference>
<dbReference type="PDB" id="3NUH">
    <property type="method" value="X-ray"/>
    <property type="resolution" value="3.10 A"/>
    <property type="chains" value="B=389-804"/>
</dbReference>
<dbReference type="PDB" id="4DUH">
    <property type="method" value="X-ray"/>
    <property type="resolution" value="1.50 A"/>
    <property type="chains" value="A/B=1-220"/>
</dbReference>
<dbReference type="PDB" id="4HYP">
    <property type="method" value="X-ray"/>
    <property type="resolution" value="2.60 A"/>
    <property type="chains" value="A/B/C/D=15-220"/>
</dbReference>
<dbReference type="PDB" id="4KFG">
    <property type="method" value="X-ray"/>
    <property type="resolution" value="1.60 A"/>
    <property type="chains" value="A/B=15-220"/>
</dbReference>
<dbReference type="PDB" id="4PRV">
    <property type="method" value="X-ray"/>
    <property type="resolution" value="2.00 A"/>
    <property type="chains" value="A=2-392"/>
</dbReference>
<dbReference type="PDB" id="4PRX">
    <property type="method" value="X-ray"/>
    <property type="resolution" value="1.80 A"/>
    <property type="chains" value="A=2-392"/>
</dbReference>
<dbReference type="PDB" id="4PU9">
    <property type="method" value="X-ray"/>
    <property type="resolution" value="2.40 A"/>
    <property type="chains" value="A=2-392"/>
</dbReference>
<dbReference type="PDB" id="4WUB">
    <property type="method" value="X-ray"/>
    <property type="resolution" value="1.75 A"/>
    <property type="chains" value="A=2-393"/>
</dbReference>
<dbReference type="PDB" id="4WUC">
    <property type="method" value="X-ray"/>
    <property type="resolution" value="1.90 A"/>
    <property type="chains" value="A=2-393"/>
</dbReference>
<dbReference type="PDB" id="4WUD">
    <property type="method" value="X-ray"/>
    <property type="resolution" value="1.95 A"/>
    <property type="chains" value="A=2-393"/>
</dbReference>
<dbReference type="PDB" id="4XTJ">
    <property type="method" value="X-ray"/>
    <property type="resolution" value="1.92 A"/>
    <property type="chains" value="A=2-392"/>
</dbReference>
<dbReference type="PDB" id="4ZVI">
    <property type="method" value="X-ray"/>
    <property type="resolution" value="2.20 A"/>
    <property type="chains" value="A=16-392"/>
</dbReference>
<dbReference type="PDB" id="5L3J">
    <property type="method" value="X-ray"/>
    <property type="resolution" value="2.83 A"/>
    <property type="chains" value="A=15-392"/>
</dbReference>
<dbReference type="PDB" id="5MMN">
    <property type="method" value="X-ray"/>
    <property type="resolution" value="1.90 A"/>
    <property type="chains" value="A=1-220"/>
</dbReference>
<dbReference type="PDB" id="5MMO">
    <property type="method" value="X-ray"/>
    <property type="resolution" value="1.81 A"/>
    <property type="chains" value="A=1-220"/>
</dbReference>
<dbReference type="PDB" id="5MMP">
    <property type="method" value="X-ray"/>
    <property type="resolution" value="2.05 A"/>
    <property type="chains" value="A=1-220"/>
</dbReference>
<dbReference type="PDB" id="5Z4H">
    <property type="method" value="X-ray"/>
    <property type="resolution" value="2.00 A"/>
    <property type="chains" value="A/B=15-221"/>
</dbReference>
<dbReference type="PDB" id="5Z4O">
    <property type="method" value="X-ray"/>
    <property type="resolution" value="1.73 A"/>
    <property type="chains" value="A/B=15-221"/>
</dbReference>
<dbReference type="PDB" id="5Z9B">
    <property type="method" value="X-ray"/>
    <property type="resolution" value="2.10 A"/>
    <property type="chains" value="A/B=15-221"/>
</dbReference>
<dbReference type="PDB" id="5Z9E">
    <property type="method" value="X-ray"/>
    <property type="resolution" value="1.80 A"/>
    <property type="chains" value="A/B=15-221"/>
</dbReference>
<dbReference type="PDB" id="5Z9F">
    <property type="method" value="X-ray"/>
    <property type="resolution" value="1.76 A"/>
    <property type="chains" value="A/B=15-221"/>
</dbReference>
<dbReference type="PDB" id="5Z9L">
    <property type="method" value="X-ray"/>
    <property type="resolution" value="1.60 A"/>
    <property type="chains" value="A/B=15-221"/>
</dbReference>
<dbReference type="PDB" id="5Z9M">
    <property type="method" value="X-ray"/>
    <property type="resolution" value="2.74 A"/>
    <property type="chains" value="A/B=15-221"/>
</dbReference>
<dbReference type="PDB" id="5Z9N">
    <property type="method" value="X-ray"/>
    <property type="resolution" value="2.54 A"/>
    <property type="chains" value="A=15-221"/>
</dbReference>
<dbReference type="PDB" id="5Z9Q">
    <property type="method" value="X-ray"/>
    <property type="resolution" value="1.80 A"/>
    <property type="chains" value="A/B=15-221"/>
</dbReference>
<dbReference type="PDB" id="6ENG">
    <property type="method" value="X-ray"/>
    <property type="resolution" value="2.30 A"/>
    <property type="chains" value="A/B=1-393"/>
</dbReference>
<dbReference type="PDB" id="6F86">
    <property type="method" value="X-ray"/>
    <property type="resolution" value="1.90 A"/>
    <property type="chains" value="A=15-220"/>
</dbReference>
<dbReference type="PDB" id="6F8J">
    <property type="method" value="X-ray"/>
    <property type="resolution" value="1.95 A"/>
    <property type="chains" value="A=1-220"/>
</dbReference>
<dbReference type="PDB" id="6F94">
    <property type="method" value="X-ray"/>
    <property type="resolution" value="2.35 A"/>
    <property type="chains" value="A=1-220"/>
</dbReference>
<dbReference type="PDB" id="6F96">
    <property type="method" value="X-ray"/>
    <property type="resolution" value="2.50 A"/>
    <property type="chains" value="A=1-220"/>
</dbReference>
<dbReference type="PDB" id="6KZV">
    <property type="method" value="X-ray"/>
    <property type="resolution" value="2.40 A"/>
    <property type="chains" value="A=1-220"/>
</dbReference>
<dbReference type="PDB" id="6KZX">
    <property type="method" value="X-ray"/>
    <property type="resolution" value="2.10 A"/>
    <property type="chains" value="A=1-220"/>
</dbReference>
<dbReference type="PDB" id="6KZZ">
    <property type="method" value="X-ray"/>
    <property type="resolution" value="2.00 A"/>
    <property type="chains" value="A=1-220"/>
</dbReference>
<dbReference type="PDB" id="6L01">
    <property type="method" value="X-ray"/>
    <property type="resolution" value="2.60 A"/>
    <property type="chains" value="A=1-220"/>
</dbReference>
<dbReference type="PDB" id="6RKS">
    <property type="method" value="EM"/>
    <property type="resolution" value="4.00 A"/>
    <property type="chains" value="B/D=1-804"/>
</dbReference>
<dbReference type="PDB" id="6RKU">
    <property type="method" value="EM"/>
    <property type="resolution" value="4.00 A"/>
    <property type="chains" value="B/D=1-804"/>
</dbReference>
<dbReference type="PDB" id="6RKV">
    <property type="method" value="EM"/>
    <property type="resolution" value="4.60 A"/>
    <property type="chains" value="B/D=1-804"/>
</dbReference>
<dbReference type="PDB" id="6RKW">
    <property type="method" value="EM"/>
    <property type="resolution" value="6.60 A"/>
    <property type="chains" value="B/D=1-804"/>
</dbReference>
<dbReference type="PDB" id="6YD9">
    <property type="method" value="X-ray"/>
    <property type="resolution" value="1.60 A"/>
    <property type="chains" value="A=1-220"/>
</dbReference>
<dbReference type="PDB" id="7C7N">
    <property type="method" value="X-ray"/>
    <property type="resolution" value="2.30 A"/>
    <property type="chains" value="A=1-220"/>
</dbReference>
<dbReference type="PDB" id="7C7O">
    <property type="method" value="X-ray"/>
    <property type="resolution" value="1.80 A"/>
    <property type="chains" value="A=1-220"/>
</dbReference>
<dbReference type="PDB" id="7DOR">
    <property type="method" value="X-ray"/>
    <property type="resolution" value="1.89 A"/>
    <property type="chains" value="A/B=16-221"/>
</dbReference>
<dbReference type="PDB" id="7DPR">
    <property type="method" value="X-ray"/>
    <property type="resolution" value="1.75 A"/>
    <property type="chains" value="A/B=16-221"/>
</dbReference>
<dbReference type="PDB" id="7DPS">
    <property type="method" value="X-ray"/>
    <property type="resolution" value="2.26 A"/>
    <property type="chains" value="A/B=16-221"/>
</dbReference>
<dbReference type="PDB" id="7DQF">
    <property type="method" value="X-ray"/>
    <property type="resolution" value="1.80 A"/>
    <property type="chains" value="A/B=16-221"/>
</dbReference>
<dbReference type="PDB" id="7DQH">
    <property type="method" value="X-ray"/>
    <property type="resolution" value="1.91 A"/>
    <property type="chains" value="A/B=16-221"/>
</dbReference>
<dbReference type="PDB" id="7DQI">
    <property type="method" value="X-ray"/>
    <property type="resolution" value="1.91 A"/>
    <property type="chains" value="A/B=16-221"/>
</dbReference>
<dbReference type="PDB" id="7DQJ">
    <property type="method" value="X-ray"/>
    <property type="resolution" value="1.92 A"/>
    <property type="chains" value="A/B=16-221"/>
</dbReference>
<dbReference type="PDB" id="7DQL">
    <property type="method" value="X-ray"/>
    <property type="resolution" value="1.93 A"/>
    <property type="chains" value="A/B=16-221"/>
</dbReference>
<dbReference type="PDB" id="7DQM">
    <property type="method" value="X-ray"/>
    <property type="resolution" value="1.78 A"/>
    <property type="chains" value="A/B=16-221"/>
</dbReference>
<dbReference type="PDB" id="7DQS">
    <property type="method" value="X-ray"/>
    <property type="resolution" value="1.85 A"/>
    <property type="chains" value="A/B=16-221"/>
</dbReference>
<dbReference type="PDB" id="7DQU">
    <property type="method" value="X-ray"/>
    <property type="resolution" value="1.88 A"/>
    <property type="chains" value="A/B=16-221"/>
</dbReference>
<dbReference type="PDB" id="7DQW">
    <property type="method" value="X-ray"/>
    <property type="resolution" value="1.88 A"/>
    <property type="chains" value="A/B=16-221"/>
</dbReference>
<dbReference type="PDB" id="7P2M">
    <property type="method" value="X-ray"/>
    <property type="resolution" value="1.16 A"/>
    <property type="chains" value="A=1-220"/>
</dbReference>
<dbReference type="PDB" id="7P2N">
    <property type="method" value="X-ray"/>
    <property type="resolution" value="1.16 A"/>
    <property type="chains" value="A=1-220"/>
</dbReference>
<dbReference type="PDB" id="7P2W">
    <property type="method" value="X-ray"/>
    <property type="resolution" value="1.65 A"/>
    <property type="chains" value="A=1-220"/>
</dbReference>
<dbReference type="PDB" id="7P2X">
    <property type="method" value="X-ray"/>
    <property type="resolution" value="1.60 A"/>
    <property type="chains" value="A=1-220"/>
</dbReference>
<dbReference type="PDB" id="7Z9C">
    <property type="method" value="EM"/>
    <property type="resolution" value="3.06 A"/>
    <property type="chains" value="B/D=2-804"/>
</dbReference>
<dbReference type="PDB" id="7Z9G">
    <property type="method" value="EM"/>
    <property type="resolution" value="3.25 A"/>
    <property type="chains" value="B/D=2-804"/>
</dbReference>
<dbReference type="PDB" id="7Z9K">
    <property type="method" value="EM"/>
    <property type="resolution" value="3.25 A"/>
    <property type="chains" value="B/D=2-804"/>
</dbReference>
<dbReference type="PDB" id="7Z9M">
    <property type="method" value="EM"/>
    <property type="resolution" value="3.30 A"/>
    <property type="chains" value="B/D=2-804"/>
</dbReference>
<dbReference type="PDB" id="8QDX">
    <property type="method" value="EM"/>
    <property type="resolution" value="3.00 A"/>
    <property type="chains" value="B/D=1-804"/>
</dbReference>
<dbReference type="PDB" id="8QQI">
    <property type="method" value="EM"/>
    <property type="resolution" value="2.90 A"/>
    <property type="chains" value="B/D=1-800"/>
</dbReference>
<dbReference type="PDB" id="8QQS">
    <property type="method" value="EM"/>
    <property type="resolution" value="2.90 A"/>
    <property type="chains" value="B/D=1-804"/>
</dbReference>
<dbReference type="PDB" id="8QQU">
    <property type="method" value="EM"/>
    <property type="resolution" value="2.90 A"/>
    <property type="chains" value="D=1-804"/>
</dbReference>
<dbReference type="PDB" id="9GBV">
    <property type="method" value="EM"/>
    <property type="resolution" value="2.32 A"/>
    <property type="chains" value="B/D=2-804"/>
</dbReference>
<dbReference type="PDB" id="9GGQ">
    <property type="method" value="EM"/>
    <property type="resolution" value="2.60 A"/>
    <property type="chains" value="B/D=2-804"/>
</dbReference>
<dbReference type="PDBsum" id="1AJ6"/>
<dbReference type="PDBsum" id="1EI1"/>
<dbReference type="PDBsum" id="1KZN"/>
<dbReference type="PDBsum" id="3G7E"/>
<dbReference type="PDBsum" id="3NUH"/>
<dbReference type="PDBsum" id="4DUH"/>
<dbReference type="PDBsum" id="4HYP"/>
<dbReference type="PDBsum" id="4KFG"/>
<dbReference type="PDBsum" id="4PRV"/>
<dbReference type="PDBsum" id="4PRX"/>
<dbReference type="PDBsum" id="4PU9"/>
<dbReference type="PDBsum" id="4WUB"/>
<dbReference type="PDBsum" id="4WUC"/>
<dbReference type="PDBsum" id="4WUD"/>
<dbReference type="PDBsum" id="4XTJ"/>
<dbReference type="PDBsum" id="4ZVI"/>
<dbReference type="PDBsum" id="5L3J"/>
<dbReference type="PDBsum" id="5MMN"/>
<dbReference type="PDBsum" id="5MMO"/>
<dbReference type="PDBsum" id="5MMP"/>
<dbReference type="PDBsum" id="5Z4H"/>
<dbReference type="PDBsum" id="5Z4O"/>
<dbReference type="PDBsum" id="5Z9B"/>
<dbReference type="PDBsum" id="5Z9E"/>
<dbReference type="PDBsum" id="5Z9F"/>
<dbReference type="PDBsum" id="5Z9L"/>
<dbReference type="PDBsum" id="5Z9M"/>
<dbReference type="PDBsum" id="5Z9N"/>
<dbReference type="PDBsum" id="5Z9Q"/>
<dbReference type="PDBsum" id="6ENG"/>
<dbReference type="PDBsum" id="6F86"/>
<dbReference type="PDBsum" id="6F8J"/>
<dbReference type="PDBsum" id="6F94"/>
<dbReference type="PDBsum" id="6F96"/>
<dbReference type="PDBsum" id="6KZV"/>
<dbReference type="PDBsum" id="6KZX"/>
<dbReference type="PDBsum" id="6KZZ"/>
<dbReference type="PDBsum" id="6L01"/>
<dbReference type="PDBsum" id="6RKS"/>
<dbReference type="PDBsum" id="6RKU"/>
<dbReference type="PDBsum" id="6RKV"/>
<dbReference type="PDBsum" id="6RKW"/>
<dbReference type="PDBsum" id="6YD9"/>
<dbReference type="PDBsum" id="7C7N"/>
<dbReference type="PDBsum" id="7C7O"/>
<dbReference type="PDBsum" id="7DOR"/>
<dbReference type="PDBsum" id="7DPR"/>
<dbReference type="PDBsum" id="7DPS"/>
<dbReference type="PDBsum" id="7DQF"/>
<dbReference type="PDBsum" id="7DQH"/>
<dbReference type="PDBsum" id="7DQI"/>
<dbReference type="PDBsum" id="7DQJ"/>
<dbReference type="PDBsum" id="7DQL"/>
<dbReference type="PDBsum" id="7DQM"/>
<dbReference type="PDBsum" id="7DQS"/>
<dbReference type="PDBsum" id="7DQU"/>
<dbReference type="PDBsum" id="7DQW"/>
<dbReference type="PDBsum" id="7P2M"/>
<dbReference type="PDBsum" id="7P2N"/>
<dbReference type="PDBsum" id="7P2W"/>
<dbReference type="PDBsum" id="7P2X"/>
<dbReference type="PDBsum" id="7Z9C"/>
<dbReference type="PDBsum" id="7Z9G"/>
<dbReference type="PDBsum" id="7Z9K"/>
<dbReference type="PDBsum" id="7Z9M"/>
<dbReference type="PDBsum" id="8QDX"/>
<dbReference type="PDBsum" id="8QQI"/>
<dbReference type="PDBsum" id="8QQS"/>
<dbReference type="PDBsum" id="8QQU"/>
<dbReference type="PDBsum" id="9GBV"/>
<dbReference type="PDBsum" id="9GGQ"/>
<dbReference type="BMRB" id="P0AES6"/>
<dbReference type="EMDB" id="EMD-14570"/>
<dbReference type="EMDB" id="EMD-14572"/>
<dbReference type="EMDB" id="EMD-14573"/>
<dbReference type="EMDB" id="EMD-14574"/>
<dbReference type="EMDB" id="EMD-18342"/>
<dbReference type="EMDB" id="EMD-18592"/>
<dbReference type="EMDB" id="EMD-18603"/>
<dbReference type="EMDB" id="EMD-18605"/>
<dbReference type="EMDB" id="EMD-4909"/>
<dbReference type="EMDB" id="EMD-4910"/>
<dbReference type="EMDB" id="EMD-4912"/>
<dbReference type="EMDB" id="EMD-4913"/>
<dbReference type="EMDB" id="EMD-51218"/>
<dbReference type="EMDB" id="EMD-51222"/>
<dbReference type="EMDB" id="EMD-51339"/>
<dbReference type="SMR" id="P0AES6"/>
<dbReference type="BioGRID" id="4259537">
    <property type="interactions" value="189"/>
</dbReference>
<dbReference type="ComplexPortal" id="CPX-2177">
    <property type="entry name" value="GyrA-GyrB DNA Gyrase complex"/>
</dbReference>
<dbReference type="DIP" id="DIP-48005N"/>
<dbReference type="FunCoup" id="P0AES6">
    <property type="interactions" value="591"/>
</dbReference>
<dbReference type="IntAct" id="P0AES6">
    <property type="interactions" value="20"/>
</dbReference>
<dbReference type="STRING" id="511145.b3699"/>
<dbReference type="BindingDB" id="P0AES6"/>
<dbReference type="ChEMBL" id="CHEMBL1826"/>
<dbReference type="DrugBank" id="DB03966">
    <property type="generic name" value="Clorobiocin"/>
</dbReference>
<dbReference type="DrugBank" id="DB13912">
    <property type="generic name" value="Coumermycin A1"/>
</dbReference>
<dbReference type="DrugBank" id="DB18409">
    <property type="generic name" value="Fobrepodacin"/>
</dbReference>
<dbReference type="DrugBank" id="DB04395">
    <property type="generic name" value="Phosphoaminophosphonic Acid-Adenylate Ester"/>
</dbReference>
<dbReference type="DrugBank" id="DB00817">
    <property type="generic name" value="Rosoxacin"/>
</dbReference>
<dbReference type="DrugBank" id="DB05488">
    <property type="generic name" value="Technetium Tc-99m ciprofloxacin"/>
</dbReference>
<dbReference type="DrugCentral" id="P0AES6"/>
<dbReference type="jPOST" id="P0AES6"/>
<dbReference type="PaxDb" id="511145-b3699"/>
<dbReference type="EnsemblBacteria" id="AAT48201">
    <property type="protein sequence ID" value="AAT48201"/>
    <property type="gene ID" value="b3699"/>
</dbReference>
<dbReference type="GeneID" id="93778440"/>
<dbReference type="GeneID" id="948211"/>
<dbReference type="KEGG" id="ecj:JW5625"/>
<dbReference type="KEGG" id="eco:b3699"/>
<dbReference type="KEGG" id="ecoc:C3026_20055"/>
<dbReference type="PATRIC" id="fig|511145.12.peg.3823"/>
<dbReference type="EchoBASE" id="EB0419"/>
<dbReference type="eggNOG" id="COG0187">
    <property type="taxonomic scope" value="Bacteria"/>
</dbReference>
<dbReference type="HOGENOM" id="CLU_006146_4_1_6"/>
<dbReference type="InParanoid" id="P0AES6"/>
<dbReference type="OMA" id="QLWSTTM"/>
<dbReference type="OrthoDB" id="9802808at2"/>
<dbReference type="PhylomeDB" id="P0AES6"/>
<dbReference type="BioCyc" id="EcoCyc:EG10424-MONOMER"/>
<dbReference type="BioCyc" id="MetaCyc:EG10424-MONOMER"/>
<dbReference type="BRENDA" id="5.6.2.2">
    <property type="organism ID" value="2026"/>
</dbReference>
<dbReference type="EvolutionaryTrace" id="P0AES6"/>
<dbReference type="PRO" id="PR:P0AES6"/>
<dbReference type="Proteomes" id="UP000000625">
    <property type="component" value="Chromosome"/>
</dbReference>
<dbReference type="GO" id="GO:0005694">
    <property type="term" value="C:chromosome"/>
    <property type="evidence" value="ECO:0007669"/>
    <property type="project" value="InterPro"/>
</dbReference>
<dbReference type="GO" id="GO:0005737">
    <property type="term" value="C:cytoplasm"/>
    <property type="evidence" value="ECO:0000314"/>
    <property type="project" value="EcoliWiki"/>
</dbReference>
<dbReference type="GO" id="GO:0005829">
    <property type="term" value="C:cytosol"/>
    <property type="evidence" value="ECO:0000314"/>
    <property type="project" value="EcoCyc"/>
</dbReference>
<dbReference type="GO" id="GO:0009330">
    <property type="term" value="C:DNA topoisomerase type II (double strand cut, ATP-hydrolyzing) complex"/>
    <property type="evidence" value="ECO:0000314"/>
    <property type="project" value="EcoliWiki"/>
</dbReference>
<dbReference type="GO" id="GO:0005524">
    <property type="term" value="F:ATP binding"/>
    <property type="evidence" value="ECO:0000314"/>
    <property type="project" value="EcoliWiki"/>
</dbReference>
<dbReference type="GO" id="GO:0008094">
    <property type="term" value="F:ATP-dependent activity, acting on DNA"/>
    <property type="evidence" value="ECO:0000314"/>
    <property type="project" value="EcoliWiki"/>
</dbReference>
<dbReference type="GO" id="GO:0003677">
    <property type="term" value="F:DNA binding"/>
    <property type="evidence" value="ECO:0000314"/>
    <property type="project" value="EcoliWiki"/>
</dbReference>
<dbReference type="GO" id="GO:0034335">
    <property type="term" value="F:DNA negative supercoiling activity"/>
    <property type="evidence" value="ECO:0000314"/>
    <property type="project" value="UniProtKB"/>
</dbReference>
<dbReference type="GO" id="GO:0003918">
    <property type="term" value="F:DNA topoisomerase type II (double strand cut, ATP-hydrolyzing) activity"/>
    <property type="evidence" value="ECO:0000314"/>
    <property type="project" value="EcoliWiki"/>
</dbReference>
<dbReference type="GO" id="GO:0046872">
    <property type="term" value="F:metal ion binding"/>
    <property type="evidence" value="ECO:0007669"/>
    <property type="project" value="UniProtKB-KW"/>
</dbReference>
<dbReference type="GO" id="GO:0006265">
    <property type="term" value="P:DNA topological change"/>
    <property type="evidence" value="ECO:0000315"/>
    <property type="project" value="EcoliWiki"/>
</dbReference>
<dbReference type="GO" id="GO:0006261">
    <property type="term" value="P:DNA-templated DNA replication"/>
    <property type="evidence" value="ECO:0007669"/>
    <property type="project" value="UniProtKB-UniRule"/>
</dbReference>
<dbReference type="GO" id="GO:0006351">
    <property type="term" value="P:DNA-templated transcription"/>
    <property type="evidence" value="ECO:0000315"/>
    <property type="project" value="EcoliWiki"/>
</dbReference>
<dbReference type="GO" id="GO:0046677">
    <property type="term" value="P:response to antibiotic"/>
    <property type="evidence" value="ECO:0007669"/>
    <property type="project" value="UniProtKB-KW"/>
</dbReference>
<dbReference type="GO" id="GO:0009410">
    <property type="term" value="P:response to xenobiotic stimulus"/>
    <property type="evidence" value="ECO:0000314"/>
    <property type="project" value="EcoliWiki"/>
</dbReference>
<dbReference type="CDD" id="cd16928">
    <property type="entry name" value="HATPase_GyrB-like"/>
    <property type="match status" value="1"/>
</dbReference>
<dbReference type="CDD" id="cd00822">
    <property type="entry name" value="TopoII_Trans_DNA_gyrase"/>
    <property type="match status" value="1"/>
</dbReference>
<dbReference type="CDD" id="cd03366">
    <property type="entry name" value="TOPRIM_TopoIIA_GyrB"/>
    <property type="match status" value="1"/>
</dbReference>
<dbReference type="FunFam" id="3.10.20.690:FF:000001">
    <property type="entry name" value="DNA gyrase subunit B"/>
    <property type="match status" value="1"/>
</dbReference>
<dbReference type="FunFam" id="3.30.230.10:FF:000005">
    <property type="entry name" value="DNA gyrase subunit B"/>
    <property type="match status" value="1"/>
</dbReference>
<dbReference type="FunFam" id="3.30.565.10:FF:000002">
    <property type="entry name" value="DNA gyrase subunit B"/>
    <property type="match status" value="1"/>
</dbReference>
<dbReference type="FunFam" id="3.40.50.670:FF:000004">
    <property type="entry name" value="DNA gyrase subunit B"/>
    <property type="match status" value="1"/>
</dbReference>
<dbReference type="FunFam" id="3.40.50.670:FF:000005">
    <property type="entry name" value="DNA gyrase subunit B"/>
    <property type="match status" value="1"/>
</dbReference>
<dbReference type="Gene3D" id="3.10.20.690">
    <property type="match status" value="1"/>
</dbReference>
<dbReference type="Gene3D" id="3.30.230.10">
    <property type="match status" value="1"/>
</dbReference>
<dbReference type="Gene3D" id="3.40.50.670">
    <property type="match status" value="2"/>
</dbReference>
<dbReference type="Gene3D" id="3.30.565.10">
    <property type="entry name" value="Histidine kinase-like ATPase, C-terminal domain"/>
    <property type="match status" value="1"/>
</dbReference>
<dbReference type="HAMAP" id="MF_01898">
    <property type="entry name" value="GyrB"/>
    <property type="match status" value="1"/>
</dbReference>
<dbReference type="InterPro" id="IPR002288">
    <property type="entry name" value="DNA_gyrase_B_C"/>
</dbReference>
<dbReference type="InterPro" id="IPR011557">
    <property type="entry name" value="GyrB"/>
</dbReference>
<dbReference type="InterPro" id="IPR049353">
    <property type="entry name" value="GyrB_hook"/>
</dbReference>
<dbReference type="InterPro" id="IPR041423">
    <property type="entry name" value="GyrB_insert"/>
</dbReference>
<dbReference type="InterPro" id="IPR036890">
    <property type="entry name" value="HATPase_C_sf"/>
</dbReference>
<dbReference type="InterPro" id="IPR020568">
    <property type="entry name" value="Ribosomal_Su5_D2-typ_SF"/>
</dbReference>
<dbReference type="InterPro" id="IPR014721">
    <property type="entry name" value="Ribsml_uS5_D2-typ_fold_subgr"/>
</dbReference>
<dbReference type="InterPro" id="IPR001241">
    <property type="entry name" value="Topo_IIA"/>
</dbReference>
<dbReference type="InterPro" id="IPR013760">
    <property type="entry name" value="Topo_IIA-like_dom_sf"/>
</dbReference>
<dbReference type="InterPro" id="IPR000565">
    <property type="entry name" value="Topo_IIA_B"/>
</dbReference>
<dbReference type="InterPro" id="IPR013759">
    <property type="entry name" value="Topo_IIA_B_C"/>
</dbReference>
<dbReference type="InterPro" id="IPR013506">
    <property type="entry name" value="Topo_IIA_bsu_dom2"/>
</dbReference>
<dbReference type="InterPro" id="IPR018522">
    <property type="entry name" value="TopoIIA_CS"/>
</dbReference>
<dbReference type="InterPro" id="IPR006171">
    <property type="entry name" value="TOPRIM_dom"/>
</dbReference>
<dbReference type="InterPro" id="IPR034160">
    <property type="entry name" value="TOPRIM_GyrB"/>
</dbReference>
<dbReference type="NCBIfam" id="TIGR01059">
    <property type="entry name" value="gyrB"/>
    <property type="match status" value="1"/>
</dbReference>
<dbReference type="NCBIfam" id="NF004189">
    <property type="entry name" value="PRK05644.1"/>
    <property type="match status" value="1"/>
</dbReference>
<dbReference type="NCBIfam" id="NF011501">
    <property type="entry name" value="PRK14939.1"/>
    <property type="match status" value="1"/>
</dbReference>
<dbReference type="PANTHER" id="PTHR45866:SF1">
    <property type="entry name" value="DNA GYRASE SUBUNIT B, MITOCHONDRIAL"/>
    <property type="match status" value="1"/>
</dbReference>
<dbReference type="PANTHER" id="PTHR45866">
    <property type="entry name" value="DNA GYRASE/TOPOISOMERASE SUBUNIT B"/>
    <property type="match status" value="1"/>
</dbReference>
<dbReference type="Pfam" id="PF00204">
    <property type="entry name" value="DNA_gyraseB"/>
    <property type="match status" value="1"/>
</dbReference>
<dbReference type="Pfam" id="PF00986">
    <property type="entry name" value="DNA_gyraseB_C"/>
    <property type="match status" value="1"/>
</dbReference>
<dbReference type="Pfam" id="PF21249">
    <property type="entry name" value="GyrB_hook"/>
    <property type="match status" value="1"/>
</dbReference>
<dbReference type="Pfam" id="PF18053">
    <property type="entry name" value="GyrB_insert"/>
    <property type="match status" value="1"/>
</dbReference>
<dbReference type="Pfam" id="PF02518">
    <property type="entry name" value="HATPase_c"/>
    <property type="match status" value="1"/>
</dbReference>
<dbReference type="Pfam" id="PF01751">
    <property type="entry name" value="Toprim"/>
    <property type="match status" value="1"/>
</dbReference>
<dbReference type="PRINTS" id="PR01159">
    <property type="entry name" value="DNAGYRASEB"/>
</dbReference>
<dbReference type="PRINTS" id="PR00418">
    <property type="entry name" value="TPI2FAMILY"/>
</dbReference>
<dbReference type="SMART" id="SM00387">
    <property type="entry name" value="HATPase_c"/>
    <property type="match status" value="1"/>
</dbReference>
<dbReference type="SMART" id="SM00433">
    <property type="entry name" value="TOP2c"/>
    <property type="match status" value="1"/>
</dbReference>
<dbReference type="SUPFAM" id="SSF55874">
    <property type="entry name" value="ATPase domain of HSP90 chaperone/DNA topoisomerase II/histidine kinase"/>
    <property type="match status" value="1"/>
</dbReference>
<dbReference type="SUPFAM" id="SSF54211">
    <property type="entry name" value="Ribosomal protein S5 domain 2-like"/>
    <property type="match status" value="1"/>
</dbReference>
<dbReference type="SUPFAM" id="SSF56719">
    <property type="entry name" value="Type II DNA topoisomerase"/>
    <property type="match status" value="1"/>
</dbReference>
<dbReference type="PROSITE" id="PS00177">
    <property type="entry name" value="TOPOISOMERASE_II"/>
    <property type="match status" value="1"/>
</dbReference>
<dbReference type="PROSITE" id="PS50880">
    <property type="entry name" value="TOPRIM"/>
    <property type="match status" value="1"/>
</dbReference>
<proteinExistence type="evidence at protein level"/>
<name>GYRB_ECOLI</name>
<keyword id="KW-0002">3D-structure</keyword>
<keyword id="KW-0046">Antibiotic resistance</keyword>
<keyword id="KW-0067">ATP-binding</keyword>
<keyword id="KW-0963">Cytoplasm</keyword>
<keyword id="KW-0903">Direct protein sequencing</keyword>
<keyword id="KW-0238">DNA-binding</keyword>
<keyword id="KW-0413">Isomerase</keyword>
<keyword id="KW-0460">Magnesium</keyword>
<keyword id="KW-0479">Metal-binding</keyword>
<keyword id="KW-0547">Nucleotide-binding</keyword>
<keyword id="KW-0630">Potassium</keyword>
<keyword id="KW-1185">Reference proteome</keyword>
<keyword id="KW-0915">Sodium</keyword>
<keyword id="KW-0799">Topoisomerase</keyword>
<reference key="1">
    <citation type="journal article" date="1986" name="Mol. Gen. Genet.">
        <title>Nalidixic acid-resistant mutations of the gyrB gene of Escherichia coli.</title>
        <authorList>
            <person name="Yamagishi J."/>
            <person name="Yoshida H."/>
            <person name="Yamayoshi M."/>
            <person name="Nakamura S."/>
        </authorList>
    </citation>
    <scope>NUCLEOTIDE SEQUENCE [GENOMIC DNA]</scope>
    <source>
        <strain>K12</strain>
    </source>
</reference>
<reference key="2">
    <citation type="journal article" date="1987" name="Nucleic Acids Res.">
        <title>DNA sequence of the E. coli gyrB gene: application of a new sequencing strategy.</title>
        <authorList>
            <person name="Adachi T."/>
            <person name="Mizuuchi M."/>
            <person name="Robinson E.A."/>
            <person name="Appella E."/>
            <person name="O'Dea M.H."/>
            <person name="Gellert M."/>
            <person name="Mizuuchi K."/>
        </authorList>
    </citation>
    <scope>NUCLEOTIDE SEQUENCE [GENOMIC DNA]</scope>
    <source>
        <strain>K12</strain>
    </source>
</reference>
<reference key="3">
    <citation type="journal article" date="1997" name="J. Biol. Chem.">
        <title>acrB mutation located at carboxyl-terminal region of gyrase B subunit reduces DNA binding of DNA gyrase.</title>
        <authorList>
            <person name="Funatsuki K."/>
            <person name="Tanaka R."/>
            <person name="Inagaki S."/>
            <person name="Konno H."/>
            <person name="Katoh K."/>
            <person name="Nakamura H."/>
        </authorList>
    </citation>
    <scope>NUCLEOTIDE SEQUENCE [GENOMIC DNA] OF VARIANT ACRB</scope>
    <scope>FUNCTION</scope>
    <scope>ACTIVITY REGULATION</scope>
    <scope>SUBUNIT</scope>
    <scope>DNA-BINDING</scope>
    <scope>ACRIDINE SENSITIVITY</scope>
    <source>
        <strain>K12 / N2879</strain>
    </source>
</reference>
<reference key="4">
    <citation type="journal article" date="1993" name="Genomics">
        <title>DNA sequence and analysis of 136 kilobases of the Escherichia coli genome: organizational symmetry around the origin of replication.</title>
        <authorList>
            <person name="Burland V.D."/>
            <person name="Plunkett G. III"/>
            <person name="Daniels D.L."/>
            <person name="Blattner F.R."/>
        </authorList>
    </citation>
    <scope>NUCLEOTIDE SEQUENCE [LARGE SCALE GENOMIC DNA]</scope>
    <source>
        <strain>K12 / MG1655 / ATCC 47076</strain>
    </source>
</reference>
<reference key="5">
    <citation type="journal article" date="1997" name="Science">
        <title>The complete genome sequence of Escherichia coli K-12.</title>
        <authorList>
            <person name="Blattner F.R."/>
            <person name="Plunkett G. III"/>
            <person name="Bloch C.A."/>
            <person name="Perna N.T."/>
            <person name="Burland V."/>
            <person name="Riley M."/>
            <person name="Collado-Vides J."/>
            <person name="Glasner J.D."/>
            <person name="Rode C.K."/>
            <person name="Mayhew G.F."/>
            <person name="Gregor J."/>
            <person name="Davis N.W."/>
            <person name="Kirkpatrick H.A."/>
            <person name="Goeden M.A."/>
            <person name="Rose D.J."/>
            <person name="Mau B."/>
            <person name="Shao Y."/>
        </authorList>
    </citation>
    <scope>NUCLEOTIDE SEQUENCE [LARGE SCALE GENOMIC DNA]</scope>
    <source>
        <strain>K12 / MG1655 / ATCC 47076</strain>
    </source>
</reference>
<reference key="6">
    <citation type="journal article" date="2006" name="Nucleic Acids Res.">
        <title>Escherichia coli K-12: a cooperatively developed annotation snapshot -- 2005.</title>
        <authorList>
            <person name="Riley M."/>
            <person name="Abe T."/>
            <person name="Arnaud M.B."/>
            <person name="Berlyn M.K.B."/>
            <person name="Blattner F.R."/>
            <person name="Chaudhuri R.R."/>
            <person name="Glasner J.D."/>
            <person name="Horiuchi T."/>
            <person name="Keseler I.M."/>
            <person name="Kosuge T."/>
            <person name="Mori H."/>
            <person name="Perna N.T."/>
            <person name="Plunkett G. III"/>
            <person name="Rudd K.E."/>
            <person name="Serres M.H."/>
            <person name="Thomas G.H."/>
            <person name="Thomson N.R."/>
            <person name="Wishart D."/>
            <person name="Wanner B.L."/>
        </authorList>
    </citation>
    <scope>SEQUENCE REVISION TO 385</scope>
</reference>
<reference key="7">
    <citation type="journal article" date="2006" name="Mol. Syst. Biol.">
        <title>Highly accurate genome sequences of Escherichia coli K-12 strains MG1655 and W3110.</title>
        <authorList>
            <person name="Hayashi K."/>
            <person name="Morooka N."/>
            <person name="Yamamoto Y."/>
            <person name="Fujita K."/>
            <person name="Isono K."/>
            <person name="Choi S."/>
            <person name="Ohtsubo E."/>
            <person name="Baba T."/>
            <person name="Wanner B.L."/>
            <person name="Mori H."/>
            <person name="Horiuchi T."/>
        </authorList>
    </citation>
    <scope>NUCLEOTIDE SEQUENCE [LARGE SCALE GENOMIC DNA]</scope>
    <source>
        <strain>K12 / W3110 / ATCC 27325 / DSM 5911</strain>
    </source>
</reference>
<reference key="8">
    <citation type="journal article" date="1984" name="Nucleic Acids Res.">
        <title>DNA sequence and transcription of the region upstream of the E. coli gyrB gene.</title>
        <authorList>
            <person name="Adachi T."/>
            <person name="Mizuuchi K."/>
            <person name="Menzel R."/>
            <person name="Gellert M."/>
        </authorList>
    </citation>
    <scope>NUCLEOTIDE SEQUENCE [GENOMIC DNA] OF 1-106</scope>
    <source>
        <strain>K12</strain>
    </source>
</reference>
<reference key="9">
    <citation type="journal article" date="1987" name="J. Bacteriol.">
        <title>Fusions of the Escherichia coli gyrA and gyrB control regions to the galactokinase gene are inducible by coumermycin treatment.</title>
        <authorList>
            <person name="Menzel R."/>
            <person name="Gellert M."/>
        </authorList>
    </citation>
    <scope>NUCLEOTIDE SEQUENCE [GENOMIC DNA] OF 1-22</scope>
</reference>
<reference key="10">
    <citation type="journal article" date="1990" name="J. Biol. Chem.">
        <title>Characterization of the ATP binding site on Escherichia coli DNA gyrase. Affinity labeling of Lys-103 and Lys-110 of the B subunit by pyridoxal 5'-diphospho-5'-adenosine.</title>
        <authorList>
            <person name="Tamura J.K."/>
            <person name="Gellert M."/>
        </authorList>
    </citation>
    <scope>PROTEIN SEQUENCE OF 93-129</scope>
    <scope>ATP-BINDING</scope>
</reference>
<reference key="11">
    <citation type="journal article" date="1976" name="Proc. Natl. Acad. Sci. U.S.A.">
        <title>DNA gyrase: an enzyme that introduces superhelical turns into DNA.</title>
        <authorList>
            <person name="Gellert M."/>
            <person name="Mizuuchi K."/>
            <person name="O'Dea M.H."/>
            <person name="Nash H.A."/>
        </authorList>
    </citation>
    <scope>FUNCTION IN GENERATING NEGATIVELY SUPERCOILED DNA</scope>
    <scope>CATALYTIC ACTIVITY</scope>
    <scope>ATP-DEPENDENCE</scope>
</reference>
<reference key="12">
    <citation type="journal article" date="1977" name="Proc. Natl. Acad. Sci. U.S.A.">
        <title>Nalidixic acid resistance: a second genetic character involved in DNA gyrase activity.</title>
        <authorList>
            <person name="Gellert M."/>
            <person name="Mizuuchi K."/>
            <person name="O'Dea M.H."/>
            <person name="Itoh T."/>
            <person name="Tomizawa J.I."/>
        </authorList>
    </citation>
    <scope>FUNCTION IN RELAXING SUPERCOILED DNA</scope>
    <scope>ACTIVITY REGULATION</scope>
</reference>
<reference key="13">
    <citation type="journal article" date="1987" name="J. Biol. Chem.">
        <title>Mapping the active site tyrosine of Escherichia coli DNA gyrase.</title>
        <authorList>
            <person name="Horowitz D.S."/>
            <person name="Wang J.C."/>
        </authorList>
    </citation>
    <scope>REACTION MECHANISM</scope>
    <scope>DNA-BINDING</scope>
</reference>
<reference key="14">
    <citation type="journal article" date="1991" name="EMBO J.">
        <title>The peptide antibiotic microcin B17 induces double-strand cleavage of DNA mediated by E. coli DNA gyrase.</title>
        <authorList>
            <person name="Vizan J.L."/>
            <person name="Hernandez-Chico C."/>
            <person name="del Castillo I."/>
            <person name="Moreno F."/>
        </authorList>
    </citation>
    <scope>MUTANTS MICROCIN B17 RESISTANT</scope>
</reference>
<reference key="15">
    <citation type="journal article" date="1992" name="Mol. Microbiol.">
        <title>gyrB mutations which confer coumarin resistance also affect DNA supercoiling and ATP hydrolysis by Escherichia coli DNA gyrase.</title>
        <authorList>
            <person name="Contreras A."/>
            <person name="Maxwell A."/>
        </authorList>
    </citation>
    <scope>FUNCTION</scope>
    <scope>MUTAGENESIS OF ARG-136 AND GLY-164</scope>
    <scope>ANTIBIOTIC RESISTANCE</scope>
</reference>
<reference key="16">
    <citation type="journal article" date="1993" name="Proc. Natl. Acad. Sci. U.S.A.">
        <title>Identifying the catalytic residue of the ATPase reaction of DNA gyrase.</title>
        <authorList>
            <person name="Jackson A.P."/>
            <person name="Maxwell A."/>
        </authorList>
    </citation>
    <scope>FUNCTION</scope>
    <scope>ATPASE ACTIVE SITE</scope>
    <scope>MUTAGENESIS OF HIS-38 AND GLU-42</scope>
</reference>
<reference key="17">
    <citation type="journal article" date="1994" name="Antimicrob. Agents Chemother.">
        <title>Mechanism of inhibition of DNA gyrase by cyclothialidine, a novel DNA gyrase inhibitor.</title>
        <authorList>
            <person name="Nakada N."/>
            <person name="Gmuender H."/>
            <person name="Hirata T."/>
            <person name="Arisawa M."/>
        </authorList>
    </citation>
    <scope>FUNCTION</scope>
    <scope>ACTIVITY REGULATION</scope>
</reference>
<reference key="18">
    <citation type="journal article" date="1996" name="J. Biol. Chem.">
        <title>Mutations in the B subunit of Escherichia coli DNA gyrase that affect ATP-dependent reactions.</title>
        <authorList>
            <person name="O'Dea M.H."/>
            <person name="Tamura J.K."/>
            <person name="Gellert M."/>
        </authorList>
    </citation>
    <scope>FUNCTION</scope>
    <scope>DOMAIN</scope>
    <scope>MUTAGENESIS OF LYS-103 AND LYS-110</scope>
</reference>
<reference key="19">
    <citation type="journal article" date="1996" name="Proc. Natl. Acad. Sci. U.S.A.">
        <title>Conversion of DNA gyrase into a conventional type II topoisomerase.</title>
        <authorList>
            <person name="Kampranis S.C."/>
            <person name="Maxwell A."/>
        </authorList>
    </citation>
    <scope>FUNCTION</scope>
</reference>
<reference key="20">
    <citation type="journal article" date="1997" name="Electrophoresis">
        <title>Escherichia coli proteome analysis using the gene-protein database.</title>
        <authorList>
            <person name="VanBogelen R.A."/>
            <person name="Abshire K.Z."/>
            <person name="Moldover B."/>
            <person name="Olson E.R."/>
            <person name="Neidhardt F.C."/>
        </authorList>
    </citation>
    <scope>IDENTIFICATION BY 2D-GEL</scope>
</reference>
<reference key="21">
    <citation type="journal article" date="1997" name="Genes Dev.">
        <title>Topoisomerase IV, not gyrase, decatenates products of site-specific recombination in Escherichia coli.</title>
        <authorList>
            <person name="Zechiedrich E.L."/>
            <person name="Khodursky A.B."/>
            <person name="Cozzarelli N.R."/>
        </authorList>
    </citation>
    <scope>FUNCTION</scope>
</reference>
<reference key="22">
    <citation type="journal article" date="1998" name="Biochemistry">
        <title>Identification of a residue involved in transition-state stabilization in the ATPase reaction of DNA gyrase.</title>
        <authorList>
            <person name="Smith C.V."/>
            <person name="Maxwell A."/>
        </authorList>
    </citation>
    <scope>FUNCTION</scope>
    <scope>DOMAIN</scope>
    <scope>MUTAGENESIS OF GLN-335 AND LYS-337</scope>
</reference>
<reference key="23">
    <citation type="journal article" date="2002" name="J. Mol. Biol.">
        <title>Identification of four GyrA residues involved in the DNA breakage-reunion reaction of DNA gyrase.</title>
        <authorList>
            <person name="Hockings S.C."/>
            <person name="Maxwell A."/>
        </authorList>
    </citation>
    <scope>FUNCTION</scope>
    <scope>CATALYTIC ACTIVITY</scope>
    <scope>SUBUNIT</scope>
</reference>
<reference key="24">
    <citation type="journal article" date="2002" name="J. Mol. Biol.">
        <title>The role of GyrB in the DNA cleavage-religation reaction of DNA gyrase: a proposed two metal-ion mechanism.</title>
        <authorList>
            <person name="Noble C.G."/>
            <person name="Maxwell A."/>
        </authorList>
    </citation>
    <scope>FUNCTION</scope>
    <scope>CATALYTIC ACTIVITY</scope>
    <scope>COFACTOR</scope>
    <scope>SUBUNIT</scope>
    <scope>MUTAGENESIS OF GLU-424; ASP-498; ASP-500 AND ASP-502</scope>
</reference>
<reference key="25">
    <citation type="journal article" date="2006" name="J. Biol. Chem.">
        <title>The 'GyrA-box' is required for the ability of DNA gyrase to wrap DNA and catalyze the supercoiling reaction.</title>
        <authorList>
            <person name="Kramlinger V.M."/>
            <person name="Hiasa H."/>
        </authorList>
    </citation>
    <scope>FUNCTION</scope>
</reference>
<reference key="26">
    <citation type="journal article" date="2007" name="J. Bacteriol.">
        <title>Growth rate toxicity phenotypes and homeostatic supercoil control differentiate Escherichia coli from Salmonella enterica serovar Typhimurium.</title>
        <authorList>
            <person name="Champion K."/>
            <person name="Higgins N.P."/>
        </authorList>
    </citation>
    <scope>FUNCTION</scope>
    <scope>MUTAGENESIS OF ARG-436</scope>
    <source>
        <strain>K12 / W3110 / ATCC 27325 / DSM 5911</strain>
    </source>
</reference>
<reference key="27">
    <citation type="journal article" date="2008" name="Biochemistry">
        <title>DNA gyrase requires DNA for effective two-site coordination of divalent metal ions: further insight into the mechanism of enzyme action.</title>
        <authorList>
            <person name="Sissi C."/>
            <person name="Chemello A."/>
            <person name="Vazquez E."/>
            <person name="Mitchenall L.A."/>
            <person name="Maxwell A."/>
            <person name="Palumbo M."/>
        </authorList>
    </citation>
    <scope>FUNCTION</scope>
    <scope>CATALYTIC ACTIVITY</scope>
    <scope>COFACTOR</scope>
    <scope>SUBUNIT</scope>
</reference>
<reference key="28">
    <citation type="journal article" date="2009" name="J. Bacteriol.">
        <title>The pentapeptide repeat proteins MfpAMt and QnrB4 exhibit opposite effects on DNA gyrase catalytic reactions and on the ternary gyrase-DNA-quinolone complex.</title>
        <authorList>
            <person name="Merens A."/>
            <person name="Matrat S."/>
            <person name="Aubry A."/>
            <person name="Lascols C."/>
            <person name="Jarlier V."/>
            <person name="Soussy C.J."/>
            <person name="Cavallo J.D."/>
            <person name="Cambau E."/>
        </authorList>
    </citation>
    <scope>FUNCTION</scope>
    <scope>ACTIVITY REGULATION</scope>
</reference>
<reference key="29">
    <citation type="journal article" date="2009" name="Science">
        <title>A crystal structure of the bifunctional antibiotic simocyclinone D8, bound to DNA gyrase.</title>
        <authorList>
            <person name="Edwards M.J."/>
            <person name="Flatman R.H."/>
            <person name="Mitchenall L.A."/>
            <person name="Stevenson C.E."/>
            <person name="Le T.B."/>
            <person name="Clarke T.A."/>
            <person name="McKay A.R."/>
            <person name="Fiedler H.P."/>
            <person name="Buttner M.J."/>
            <person name="Lawson D.M."/>
            <person name="Maxwell A."/>
        </authorList>
    </citation>
    <scope>FUNCTION</scope>
    <scope>CATALYTIC ACTIVITY</scope>
    <scope>SUBUNIT</scope>
</reference>
<reference key="30">
    <citation type="journal article" date="2012" name="J. Biol. Chem.">
        <title>Mechanisms for defining supercoiling set point of DNA gyrase orthologs: I. A nonconserved acidic C-terminal tail modulates Escherichia coli gyrase activity.</title>
        <authorList>
            <person name="Tretter E.M."/>
            <person name="Berger J.M."/>
        </authorList>
    </citation>
    <scope>FUNCTION</scope>
    <scope>DNA-BINDING</scope>
</reference>
<reference key="31">
    <citation type="journal article" date="2012" name="J. Biol. Chem.">
        <title>Mechanisms for defining supercoiling set point of DNA gyrase orthologs: II. The shape of the GyrA subunit C-terminal domain (CTD) is not a sole determinant for controlling supercoiling efficiency.</title>
        <authorList>
            <person name="Tretter E.M."/>
            <person name="Berger J.M."/>
        </authorList>
    </citation>
    <scope>FUNCTION</scope>
    <scope>DNA-BINDING</scope>
</reference>
<reference key="32">
    <citation type="journal article" date="1991" name="Antimicrob. Agents Chemother.">
        <title>Quinolone resistance-determining region in the DNA gyrase gyrB gene of Escherichia coli.</title>
        <authorList>
            <person name="Yoshida H."/>
            <person name="Bogaki M."/>
            <person name="Nakamura M."/>
            <person name="Yamanaka L.M."/>
            <person name="Nakamura S."/>
        </authorList>
    </citation>
    <scope>VARIANTS QUINOLONE-RESISTANT ASN-426 AND GLU-447</scope>
    <source>
        <strain>K16</strain>
    </source>
</reference>
<reference key="33">
    <citation type="journal article" date="2013" name="Bioorg. Med. Chem. Lett.">
        <title>Pyrrolopyrimidine inhibitors of DNA gyrase B (GyrB) and topoisomerase IV (ParE), Part II: development of inhibitors with broad spectrum, Gram-negative antibacterial activity.</title>
        <authorList>
            <person name="Trzoss M."/>
            <person name="Bensen D.C."/>
            <person name="Li X."/>
            <person name="Chen Z."/>
            <person name="Lam T."/>
            <person name="Zhang J."/>
            <person name="Creighton C.J."/>
            <person name="Cunningham M.L."/>
            <person name="Kwan B."/>
            <person name="Stidham M."/>
            <person name="Nelson K."/>
            <person name="Brown-Driver V."/>
            <person name="Castellano A."/>
            <person name="Shaw K.J."/>
            <person name="Lightstone F.C."/>
            <person name="Wong S.E."/>
            <person name="Nguyen T.B."/>
            <person name="Finn J."/>
            <person name="Tari L.W."/>
        </authorList>
    </citation>
    <scope>FUNCTION</scope>
    <scope>ACTIVITY REGULATION</scope>
</reference>
<reference key="34">
    <citation type="journal article" date="1991" name="Nature">
        <title>Crystal structure of an N-terminal fragment of the DNA gyrase B protein.</title>
        <authorList>
            <person name="Wigley D.B."/>
            <person name="Davies G.J."/>
            <person name="Dodson E.J."/>
            <person name="Maxwell A."/>
            <person name="Dodson G."/>
        </authorList>
    </citation>
    <scope>X-RAY CRYSTALLOGRAPHY (2.5 ANGSTROMS) OF 1-393 IN COMPLEX WITH ATP ANALOG</scope>
    <scope>DOMAIN</scope>
</reference>
<reference key="35">
    <citation type="journal article" date="1996" name="EMBO J.">
        <title>The nature of inhibition of DNA gyrase by the coumarins and the cyclothialidines revealed by X-ray crystallography.</title>
        <authorList>
            <person name="Lewis R.J."/>
            <person name="Singh O.M."/>
            <person name="Smith C.V."/>
            <person name="Skarzynski T."/>
            <person name="Maxwell A."/>
            <person name="Wonacott A.J."/>
            <person name="Wigley D.B."/>
        </authorList>
    </citation>
    <scope>X-RAY CRYSTALLOGRAPHY (2.0 ANGSTROMS) OF 1-220 IN COMPLEX WITH COUMARIN AND CYCLOTHIALIDINE ANTIBIOTICS</scope>
    <scope>ACTIVITY REGULATION</scope>
</reference>
<reference key="36">
    <citation type="journal article" date="1997" name="Proteins">
        <title>The high-resolution crystal structure of a 24-kDa gyrase B fragment from E. coli complexed with one of the most potent coumarin inhibitors, clorobiocin.</title>
        <authorList>
            <person name="Tsai F.T."/>
            <person name="Singh O.M."/>
            <person name="Skarzynski T."/>
            <person name="Wonacott A.J."/>
            <person name="Weston S."/>
            <person name="Tucker A."/>
            <person name="Pauptit R.A."/>
            <person name="Breeze A.L."/>
            <person name="Poyser J.P."/>
            <person name="O'Brien R."/>
            <person name="Ladbury J.E."/>
            <person name="Wigley D.B."/>
        </authorList>
    </citation>
    <scope>X-RAY CRYSTALLOGRAPHY (2.0 ANGSTROMS) OF 1-220 IN COMPLEX WITH CLOROBIOCIN</scope>
</reference>
<reference key="37">
    <citation type="journal article" date="1997" name="Biochemistry">
        <title>The entropic penalty of ordered water accounts for weaker binding of the antibiotic novobiocin to a resistant mutant of DNA gyrase: a thermodynamic and crystallographic study.</title>
        <authorList>
            <person name="Holdgate G.A."/>
            <person name="Tunnicliffe A."/>
            <person name="Ward W.H."/>
            <person name="Weston S.A."/>
            <person name="Rosenbrock G."/>
            <person name="Barth P.T."/>
            <person name="Taylor I.W."/>
            <person name="Pauptit R.A."/>
            <person name="Timms D."/>
        </authorList>
    </citation>
    <scope>X-RAY CRYSTALLOGRAPHY (2.3 ANGSTROMS) OF 2-220 OF MUTANT HIS-136 IN COMPLEX WITH NOVOBIOCIN</scope>
</reference>
<reference key="38">
    <citation type="journal article" date="2000" name="J. Biol. Chem.">
        <title>Dimerization of Escherichia coli DNA-gyrase B provides a structural mechanism for activating the ATPase catalytic center.</title>
        <authorList>
            <person name="Brino L."/>
            <person name="Urzhumtsev A."/>
            <person name="Mousli M."/>
            <person name="Bronner C."/>
            <person name="Mitschler A."/>
            <person name="Oudet P."/>
            <person name="Moras D."/>
        </authorList>
    </citation>
    <scope>X-RAY CRYSTALLOGRAPHY (2.30 ANGSTROMS) OF 2-392 OF MUTANT SER-5 IN COMPLEX WITH ATP ANALOG</scope>
    <scope>ACTIVE SITE</scope>
    <scope>DOMAIN</scope>
    <scope>MUTAGENESIS OF 1-MET--LYS-14; TYR-5 AND ILE-10</scope>
    <scope>ATP-BINDING</scope>
</reference>
<reference key="39">
    <citation type="journal article" date="2002" name="Biochemistry">
        <title>DNA gyrase interaction with coumarin-based inhibitors: the role of the hydroxybenzoate isopentenyl moiety and the 5'-methyl group of the noviose.</title>
        <authorList>
            <person name="Lafitte D."/>
            <person name="Lamour V."/>
            <person name="Tsvetkov P.O."/>
            <person name="Makarov A.A."/>
            <person name="Klich M."/>
            <person name="Deprez P."/>
            <person name="Moras D."/>
            <person name="Briand C."/>
            <person name="Gilli R."/>
        </authorList>
    </citation>
    <scope>X-RAY CRYSTALLOGRAPHY (2.30 ANGSTROMS) OF 15-219 IN COMPLEX WITH CLOROBIOCIN</scope>
</reference>
<reference key="40">
    <citation type="journal article" date="2010" name="Bioorg. Med. Chem. Lett.">
        <title>Discovery of pyrazolthiazoles as novel and potent inhibitors of bacterial gyrase.</title>
        <authorList>
            <person name="Ronkin S.M."/>
            <person name="Badia M."/>
            <person name="Bellon S."/>
            <person name="Grillot A.L."/>
            <person name="Gross C.H."/>
            <person name="Grossman T.H."/>
            <person name="Mani N."/>
            <person name="Parsons J.D."/>
            <person name="Stamos D."/>
            <person name="Trudeau M."/>
            <person name="Wei Y."/>
            <person name="Charifson P.S."/>
        </authorList>
    </citation>
    <scope>X-RAY CRYSTALLOGRAPHY (2.2 ANGSTROMS) OF 15-217 IN COMPLEX WITH PYRAZOLTHIAZOLE INHIBITOR</scope>
    <scope>FUNCTION</scope>
    <scope>ACTIVITY REGULATION</scope>
</reference>
<reference key="41">
    <citation type="journal article" date="2010" name="Nucleic Acids Res.">
        <title>A domain insertion in Escherichia coli GyrB adopts a novel fold that plays a critical role in gyrase function.</title>
        <authorList>
            <person name="Schoeffler A.J."/>
            <person name="May A.P."/>
            <person name="Berger J.M."/>
        </authorList>
    </citation>
    <scope>X-RAY CRYSTALLOGRAPHY (3.1 ANGSTROMS) OF 388-804</scope>
    <scope>FUNCTION</scope>
    <scope>CATALYTIC ACTIVITY</scope>
    <scope>SUBUNIT</scope>
</reference>
<reference key="42">
    <citation type="journal article" date="2012" name="J. Med. Chem.">
        <title>Structure-based discovery of substituted 4,5'-bithiazoles as novel DNA gyrase inhibitors.</title>
        <authorList>
            <person name="Brvar M."/>
            <person name="Perdih A."/>
            <person name="Renko M."/>
            <person name="Anderluh G."/>
            <person name="Turk D."/>
            <person name="Solmajer T."/>
        </authorList>
    </citation>
    <scope>X-RAY CRYSTALLOGRAPHY (1.5 ANGSTROMS) OF 1-220</scope>
    <scope>CATALYTIC ACTIVITY</scope>
</reference>
<reference key="43">
    <citation type="journal article" date="2013" name="Bioorg. Med. Chem. Lett.">
        <title>Pyrrolopyrimidine inhibitors of DNA gyrase B (GyrB) and topoisomerase IV (ParE). Part I: Structure guided discovery and optimization of dual targeting agents with potent, broad-spectrum enzymatic activity.</title>
        <authorList>
            <person name="Tari L.W."/>
            <person name="Trzoss M."/>
            <person name="Bensen D.C."/>
            <person name="Li X."/>
            <person name="Chen Z."/>
            <person name="Lam T."/>
            <person name="Zhang J."/>
            <person name="Creighton C.J."/>
            <person name="Cunningham M.L."/>
            <person name="Kwan B."/>
            <person name="Stidham M."/>
            <person name="Shaw K.J."/>
            <person name="Lightstone F.C."/>
            <person name="Wong S.E."/>
            <person name="Nguyen T.B."/>
            <person name="Nix J."/>
            <person name="Finn J."/>
        </authorList>
    </citation>
    <scope>X-RAY CRYSTALLOGRAPHY (2.60 ANGSTROMS) OF 15-220 IN COMPLEX WITH INHIBITOR</scope>
    <scope>FUNCTION</scope>
    <scope>ACTIVITY REGULATION</scope>
</reference>
<reference key="44">
    <citation type="journal article" date="2013" name="PLoS ONE">
        <title>Tricyclic GyrB/ParE (TriBE) inhibitors: a new class of broad-spectrum dual-targeting antibacterial agents.</title>
        <authorList>
            <person name="Tari L.W."/>
            <person name="Li X."/>
            <person name="Trzoss M."/>
            <person name="Bensen D.C."/>
            <person name="Chen Z."/>
            <person name="Lam T."/>
            <person name="Zhang J."/>
            <person name="Lee S.J."/>
            <person name="Hough G."/>
            <person name="Phillipson D."/>
            <person name="Akers-Rodriguez S."/>
            <person name="Cunningham M.L."/>
            <person name="Kwan B.P."/>
            <person name="Nelson K.J."/>
            <person name="Castellano A."/>
            <person name="Locke J.B."/>
            <person name="Brown-Driver V."/>
            <person name="Murphy T.M."/>
            <person name="Ong V.S."/>
            <person name="Pillar C.M."/>
            <person name="Shinabarger D.L."/>
            <person name="Nix J."/>
            <person name="Lightstone F.C."/>
            <person name="Wong S.E."/>
            <person name="Nguyen T.B."/>
            <person name="Shaw K.J."/>
            <person name="Finn J."/>
        </authorList>
    </citation>
    <scope>X-RAY CRYSTALLOGRAPHY (1.60 ANGSTROMS) OF 15-220 IN COMPLEX WITH INHIBITOR</scope>
    <scope>FUNCTION</scope>
    <scope>ACTIVITY REGULATION</scope>
</reference>
<reference key="45">
    <citation type="journal article" date="2014" name="PLoS ONE">
        <title>Structure of the N-terminal Gyrase B fragment in complex with ADPPi reveals rigid-body motion induced by ATP hydrolysis.</title>
        <authorList>
            <person name="Stanger F.V."/>
            <person name="Dehio C."/>
            <person name="Schirmer T."/>
        </authorList>
    </citation>
    <scope>X-RAY CRYSTALLOGRAPHY (1.80 ANGSTROMS) OF 2-392 IN OPEN; SEMI-OPEN AND CLOSED STATES IN COMPLEX WITH ADP AND ATP ANALOGS</scope>
    <scope>ATPASE ACTIVITY</scope>
    <scope>PROBABLE MECHANISM</scope>
    <scope>DOMAIN</scope>
    <scope>ATP-BINDING</scope>
</reference>
<reference key="46">
    <citation type="journal article" date="2015" name="Acta Crystallogr. D">
        <title>The role of monovalent cations in the ATPase reaction of DNA gyrase.</title>
        <authorList>
            <person name="Hearnshaw S.J."/>
            <person name="Chung T.T."/>
            <person name="Stevenson C.E."/>
            <person name="Maxwell A."/>
            <person name="Lawson D.M."/>
        </authorList>
    </citation>
    <scope>X-RAY CRYSTALLOGRAPHY (1.75 ANGSTROMS) OF 2-393 IN COMPLEX WITH ATP ANALOG AND MONOVALENT CATIONS</scope>
    <scope>ATPASE ACTIVITY</scope>
</reference>